<organism>
    <name type="scientific">Homo sapiens</name>
    <name type="common">Human</name>
    <dbReference type="NCBI Taxonomy" id="9606"/>
    <lineage>
        <taxon>Eukaryota</taxon>
        <taxon>Metazoa</taxon>
        <taxon>Chordata</taxon>
        <taxon>Craniata</taxon>
        <taxon>Vertebrata</taxon>
        <taxon>Euteleostomi</taxon>
        <taxon>Mammalia</taxon>
        <taxon>Eutheria</taxon>
        <taxon>Euarchontoglires</taxon>
        <taxon>Primates</taxon>
        <taxon>Haplorrhini</taxon>
        <taxon>Catarrhini</taxon>
        <taxon>Hominidae</taxon>
        <taxon>Homo</taxon>
    </lineage>
</organism>
<name>DRB3_HUMAN</name>
<accession>P79483</accession>
<accession>A0ZXY9</accession>
<accession>A7MA46</accession>
<accession>B5AU12</accession>
<accession>B5AU13</accession>
<accession>B5AU14</accession>
<accession>B8YAC6</accession>
<accession>C6H115</accession>
<accession>C6H116</accession>
<accession>O02875</accession>
<accession>O19590</accession>
<accession>O46701</accession>
<accession>O46794</accession>
<accession>O78049</accession>
<accession>O78162</accession>
<accession>P01913</accession>
<accession>P79663</accession>
<accession>Q29721</accession>
<accession>Q29809</accession>
<accession>Q2PPD0</accession>
<accession>Q30144</accession>
<accession>Q507L8</accession>
<accession>Q5SP44</accession>
<accession>Q5STE0</accession>
<accession>Q6YJU6</accession>
<accession>Q70M87</accession>
<accession>Q7YQ62</accession>
<accession>Q860I9</accession>
<accession>Q8SP69</accession>
<accession>Q8WLT7</accession>
<accession>Q8WLT8</accession>
<accession>Q95359</accession>
<accession>Q95HM8</accession>
<accession>Q95IE5</accession>
<accession>Q96H16</accession>
<accession>Q9BCP3</accession>
<accession>Q9BD18</accession>
<accession>Q9MYA4</accession>
<accession>Q9MYH3</accession>
<accession>Q9MYH4</accession>
<accession>Q9TP01</accession>
<accession>Q9TP02</accession>
<accession>Q9TPB5</accession>
<accession>Q9TQ21</accession>
<accession>Q9UIN3</accession>
<accession>Q9UIN5</accession>
<sequence length="266" mass="29962">MVCLKLPGGSSLAALTVTLMVLSSRLAFAGDTRPRFLELRKSECHFFNGTERVRYLDRYFHNQEEFLRFDSDVGEYRAVTELGRPVAESWNSQKDLLEQKRGRVDNYCRHNYGVGESFTVQRRVHPQVTVYPAKTQPLQHHNLLVCSVSGFYPGSIEVRWFRNGQEEKAGVVSTGLIQNGDWTFQTLVMLETVPRSGEVYTCQVEHPSVTSALTVEWRARSESAQSKMLSGVGGFVLGLLFLGAGLFIYFRNQKGHSGLQPTGFLS</sequence>
<dbReference type="EMBL" id="V00522">
    <property type="protein sequence ID" value="CAA23781.1"/>
    <property type="molecule type" value="mRNA"/>
</dbReference>
<dbReference type="EMBL" id="X04055">
    <property type="status" value="NOT_ANNOTATED_CDS"/>
    <property type="molecule type" value="Genomic_DNA"/>
</dbReference>
<dbReference type="EMBL" id="X04058">
    <property type="status" value="NOT_ANNOTATED_CDS"/>
    <property type="molecule type" value="Genomic_DNA"/>
</dbReference>
<dbReference type="EMBL" id="U66825">
    <property type="protein sequence ID" value="AAD43828.1"/>
    <property type="molecule type" value="mRNA"/>
</dbReference>
<dbReference type="EMBL" id="AF026467">
    <property type="protein sequence ID" value="AAC05599.1"/>
    <property type="molecule type" value="Genomic_DNA"/>
</dbReference>
<dbReference type="EMBL" id="AF199236">
    <property type="protein sequence ID" value="AAF13065.2"/>
    <property type="molecule type" value="mRNA"/>
</dbReference>
<dbReference type="EMBL" id="U95819">
    <property type="protein sequence ID" value="AAD00819.1"/>
    <property type="molecule type" value="mRNA"/>
</dbReference>
<dbReference type="EMBL" id="AY138123">
    <property type="protein sequence ID" value="AAN15205.1"/>
    <property type="molecule type" value="mRNA"/>
</dbReference>
<dbReference type="EMBL" id="A06800">
    <property type="protein sequence ID" value="CAA00596.1"/>
    <property type="molecule type" value="mRNA"/>
</dbReference>
<dbReference type="EMBL" id="AL662842">
    <property type="status" value="NOT_ANNOTATED_CDS"/>
    <property type="molecule type" value="Genomic_DNA"/>
</dbReference>
<dbReference type="EMBL" id="AL929581">
    <property type="status" value="NOT_ANNOTATED_CDS"/>
    <property type="molecule type" value="Genomic_DNA"/>
</dbReference>
<dbReference type="EMBL" id="CR788283">
    <property type="status" value="NOT_ANNOTATED_CDS"/>
    <property type="molecule type" value="Genomic_DNA"/>
</dbReference>
<dbReference type="EMBL" id="Z84814">
    <property type="protein sequence ID" value="CAB06607.1"/>
    <property type="molecule type" value="Genomic_DNA"/>
</dbReference>
<dbReference type="EMBL" id="BC008987">
    <property type="protein sequence ID" value="AAH08987.1"/>
    <property type="molecule type" value="mRNA"/>
</dbReference>
<dbReference type="EMBL" id="BC106057">
    <property type="protein sequence ID" value="AAI06058.1"/>
    <property type="molecule type" value="mRNA"/>
</dbReference>
<dbReference type="EMBL" id="M17380">
    <property type="protein sequence ID" value="AAA59804.1"/>
    <property type="molecule type" value="mRNA"/>
</dbReference>
<dbReference type="EMBL" id="AF192258">
    <property type="protein sequence ID" value="AAF26358.1"/>
    <property type="molecule type" value="mRNA"/>
</dbReference>
<dbReference type="EMBL" id="AF192259">
    <property type="protein sequence ID" value="AAF26359.1"/>
    <property type="molecule type" value="mRNA"/>
</dbReference>
<dbReference type="EMBL" id="FJ515276">
    <property type="protein sequence ID" value="ACL50609.1"/>
    <property type="molecule type" value="Genomic_DNA"/>
</dbReference>
<dbReference type="EMBL" id="AY291205">
    <property type="protein sequence ID" value="AAP43643.1"/>
    <property type="molecule type" value="Genomic_DNA"/>
</dbReference>
<dbReference type="EMBL" id="AF148518">
    <property type="protein sequence ID" value="AAF67837.1"/>
    <property type="molecule type" value="Genomic_DNA"/>
</dbReference>
<dbReference type="EMBL" id="AF081677">
    <property type="protein sequence ID" value="AAC32202.1"/>
    <property type="molecule type" value="Genomic_DNA"/>
</dbReference>
<dbReference type="EMBL" id="AY271986">
    <property type="protein sequence ID" value="AAP23230.1"/>
    <property type="molecule type" value="Genomic_DNA"/>
</dbReference>
<dbReference type="EMBL" id="AM747470">
    <property type="protein sequence ID" value="CAO00528.1"/>
    <property type="molecule type" value="Genomic_DNA"/>
</dbReference>
<dbReference type="EMBL" id="EU873151">
    <property type="protein sequence ID" value="ACF33221.1"/>
    <property type="molecule type" value="Genomic_DNA"/>
</dbReference>
<dbReference type="EMBL" id="EU873152">
    <property type="protein sequence ID" value="ACF33222.1"/>
    <property type="molecule type" value="Genomic_DNA"/>
</dbReference>
<dbReference type="EMBL" id="EU873153">
    <property type="protein sequence ID" value="ACF33223.1"/>
    <property type="molecule type" value="Genomic_DNA"/>
</dbReference>
<dbReference type="EMBL" id="X91639">
    <property type="status" value="NOT_ANNOTATED_CDS"/>
    <property type="molecule type" value="Genomic_DNA"/>
</dbReference>
<dbReference type="EMBL" id="AF208484">
    <property type="protein sequence ID" value="AAF23165.1"/>
    <property type="molecule type" value="Genomic_DNA"/>
</dbReference>
<dbReference type="EMBL" id="AF208485">
    <property type="protein sequence ID" value="AAF23166.1"/>
    <property type="molecule type" value="Genomic_DNA"/>
</dbReference>
<dbReference type="EMBL" id="AJ290395">
    <property type="protein sequence ID" value="CAC27417.1"/>
    <property type="molecule type" value="Genomic_DNA"/>
</dbReference>
<dbReference type="EMBL" id="AF427138">
    <property type="protein sequence ID" value="AAL26538.1"/>
    <property type="molecule type" value="Genomic_DNA"/>
</dbReference>
<dbReference type="EMBL" id="AF455114">
    <property type="protein sequence ID" value="AAL57866.1"/>
    <property type="molecule type" value="Genomic_DNA"/>
</dbReference>
<dbReference type="EMBL" id="AF461431">
    <property type="protein sequence ID" value="AAL66370.1"/>
    <property type="molecule type" value="Genomic_DNA"/>
</dbReference>
<dbReference type="EMBL" id="AJ564210">
    <property type="protein sequence ID" value="CAD91915.2"/>
    <property type="molecule type" value="Genomic_DNA"/>
</dbReference>
<dbReference type="EMBL" id="AY958608">
    <property type="protein sequence ID" value="AAY28717.1"/>
    <property type="molecule type" value="Genomic_DNA"/>
</dbReference>
<dbReference type="EMBL" id="DQ311653">
    <property type="protein sequence ID" value="ABC33924.1"/>
    <property type="molecule type" value="Genomic_DNA"/>
</dbReference>
<dbReference type="EMBL" id="AM413002">
    <property type="protein sequence ID" value="CAL85628.1"/>
    <property type="molecule type" value="Genomic_DNA"/>
</dbReference>
<dbReference type="EMBL" id="FN424163">
    <property type="protein sequence ID" value="CAZ66795.1"/>
    <property type="molecule type" value="Genomic_DNA"/>
</dbReference>
<dbReference type="EMBL" id="FN424162">
    <property type="protein sequence ID" value="CAZ66766.1"/>
    <property type="molecule type" value="Genomic_DNA"/>
</dbReference>
<dbReference type="EMBL" id="AF177216">
    <property type="protein sequence ID" value="AAD53911.1"/>
    <property type="molecule type" value="Genomic_DNA"/>
</dbReference>
<dbReference type="EMBL" id="AF361865">
    <property type="protein sequence ID" value="AAK38297.1"/>
    <property type="molecule type" value="Genomic_DNA"/>
</dbReference>
<dbReference type="EMBL" id="AY042679">
    <property type="protein sequence ID" value="AAK94514.1"/>
    <property type="molecule type" value="Genomic_DNA"/>
</dbReference>
<dbReference type="EMBL" id="U36826">
    <property type="protein sequence ID" value="AAB63531.1"/>
    <property type="molecule type" value="Genomic_DNA"/>
</dbReference>
<dbReference type="EMBL" id="U94590">
    <property type="protein sequence ID" value="AAB53324.1"/>
    <property type="molecule type" value="Genomic_DNA"/>
</dbReference>
<dbReference type="EMBL" id="X95760">
    <property type="protein sequence ID" value="CAA65066.1"/>
    <property type="molecule type" value="Genomic_DNA"/>
</dbReference>
<dbReference type="EMBL" id="Y13715">
    <property type="protein sequence ID" value="CAA74043.1"/>
    <property type="molecule type" value="Genomic_DNA"/>
</dbReference>
<dbReference type="EMBL" id="AJ001255">
    <property type="protein sequence ID" value="CAA04629.1"/>
    <property type="molecule type" value="Genomic_DNA"/>
</dbReference>
<dbReference type="EMBL" id="AJ242860">
    <property type="protein sequence ID" value="CAB62390.1"/>
    <property type="molecule type" value="Genomic_DNA"/>
</dbReference>
<dbReference type="EMBL" id="AJ242862">
    <property type="protein sequence ID" value="CAB62392.1"/>
    <property type="molecule type" value="Genomic_DNA"/>
</dbReference>
<dbReference type="EMBL" id="AJ315477">
    <property type="protein sequence ID" value="CAC86562.1"/>
    <property type="molecule type" value="Genomic_DNA"/>
</dbReference>
<dbReference type="EMBL" id="AF028012">
    <property type="protein sequence ID" value="AAB94614.1"/>
    <property type="molecule type" value="Genomic_DNA"/>
</dbReference>
<dbReference type="EMBL" id="Y08063">
    <property type="protein sequence ID" value="CAA69301.1"/>
    <property type="molecule type" value="Genomic_DNA"/>
</dbReference>
<dbReference type="EMBL" id="Y10180">
    <property type="protein sequence ID" value="CAA71253.1"/>
    <property type="molecule type" value="Genomic_DNA"/>
</dbReference>
<dbReference type="EMBL" id="X86977">
    <property type="status" value="NOT_ANNOTATED_CDS"/>
    <property type="molecule type" value="Genomic_DNA"/>
</dbReference>
<dbReference type="EMBL" id="AF152845">
    <property type="protein sequence ID" value="AAD45286.1"/>
    <property type="molecule type" value="Genomic_DNA"/>
</dbReference>
<dbReference type="PIR" id="B60748">
    <property type="entry name" value="B60748"/>
</dbReference>
<dbReference type="PIR" id="E28043">
    <property type="entry name" value="E28043"/>
</dbReference>
<dbReference type="PIR" id="I37469">
    <property type="entry name" value="HLHU5D"/>
</dbReference>
<dbReference type="PIR" id="PT0164">
    <property type="entry name" value="PT0164"/>
</dbReference>
<dbReference type="PIR" id="PT0165">
    <property type="entry name" value="PT0165"/>
</dbReference>
<dbReference type="PIR" id="PT0166">
    <property type="entry name" value="PT0166"/>
</dbReference>
<dbReference type="PIR" id="S03442">
    <property type="entry name" value="S03442"/>
</dbReference>
<dbReference type="RefSeq" id="NP_072049.2">
    <property type="nucleotide sequence ID" value="NM_022555.3"/>
</dbReference>
<dbReference type="PDB" id="2Q6W">
    <property type="method" value="X-ray"/>
    <property type="resolution" value="2.25 A"/>
    <property type="chains" value="B/E=30-219"/>
</dbReference>
<dbReference type="PDB" id="3C5J">
    <property type="method" value="X-ray"/>
    <property type="resolution" value="1.80 A"/>
    <property type="chains" value="B=30-219"/>
</dbReference>
<dbReference type="PDB" id="4H1L">
    <property type="method" value="X-ray"/>
    <property type="resolution" value="3.30 A"/>
    <property type="chains" value="B/E=33-219"/>
</dbReference>
<dbReference type="PDBsum" id="2Q6W"/>
<dbReference type="PDBsum" id="3C5J"/>
<dbReference type="PDBsum" id="4H1L"/>
<dbReference type="SMR" id="P79483"/>
<dbReference type="BioGRID" id="109370">
    <property type="interactions" value="101"/>
</dbReference>
<dbReference type="FunCoup" id="P79483">
    <property type="interactions" value="445"/>
</dbReference>
<dbReference type="IntAct" id="P79483">
    <property type="interactions" value="59"/>
</dbReference>
<dbReference type="BindingDB" id="P79483"/>
<dbReference type="ChEMBL" id="CHEMBL3460"/>
<dbReference type="DrugBank" id="DB05121">
    <property type="generic name" value="1D09C3"/>
</dbReference>
<dbReference type="DrugBank" id="DB11294">
    <property type="generic name" value="Coccidioides immitis spherule"/>
</dbReference>
<dbReference type="GlyConnect" id="1377">
    <property type="glycosylation" value="1 N-Linked glycan (1 site)"/>
</dbReference>
<dbReference type="GlyCosmos" id="P79483">
    <property type="glycosylation" value="1 site, 1 glycan"/>
</dbReference>
<dbReference type="GlyGen" id="P79483">
    <property type="glycosylation" value="1 site, 5 N-linked glycans (1 site)"/>
</dbReference>
<dbReference type="iPTMnet" id="P79483"/>
<dbReference type="PhosphoSitePlus" id="P79483"/>
<dbReference type="SwissPalm" id="P79483"/>
<dbReference type="BioMuta" id="HLA-DRB3"/>
<dbReference type="DMDM" id="34395491"/>
<dbReference type="jPOST" id="P79483"/>
<dbReference type="MassIVE" id="P79483"/>
<dbReference type="ProteomicsDB" id="57661"/>
<dbReference type="TopDownProteomics" id="P79483"/>
<dbReference type="DNASU" id="3125"/>
<dbReference type="Ensembl" id="ENST00000307137.12">
    <property type="protein sequence ID" value="ENSP00000302517.7"/>
    <property type="gene ID" value="ENSG00000196101.10"/>
</dbReference>
<dbReference type="Ensembl" id="ENST00000383126.8">
    <property type="protein sequence ID" value="ENSP00000372607.3"/>
    <property type="gene ID" value="ENSG00000231679.8"/>
</dbReference>
<dbReference type="GeneID" id="3125"/>
<dbReference type="KEGG" id="hsa:3125"/>
<dbReference type="MANE-Select" id="ENST00000383126.8">
    <property type="protein sequence ID" value="ENSP00000372607.3"/>
    <property type="RefSeq nucleotide sequence ID" value="NM_022555.4"/>
    <property type="RefSeq protein sequence ID" value="NP_072049.2"/>
</dbReference>
<dbReference type="UCSC" id="uc011fni.2">
    <property type="organism name" value="human"/>
</dbReference>
<dbReference type="AGR" id="HGNC:4951"/>
<dbReference type="CTD" id="3125"/>
<dbReference type="DisGeNET" id="3125"/>
<dbReference type="GeneCards" id="HLA-DRB3"/>
<dbReference type="HGNC" id="HGNC:4951">
    <property type="gene designation" value="HLA-DRB3"/>
</dbReference>
<dbReference type="MalaCards" id="HLA-DRB3"/>
<dbReference type="MIM" id="612735">
    <property type="type" value="gene"/>
</dbReference>
<dbReference type="neXtProt" id="NX_P79483"/>
<dbReference type="PharmGKB" id="PA35074"/>
<dbReference type="InParanoid" id="P79483"/>
<dbReference type="PAN-GO" id="P79483">
    <property type="GO annotations" value="8 GO annotations based on evolutionary models"/>
</dbReference>
<dbReference type="PhylomeDB" id="P79483"/>
<dbReference type="PathwayCommons" id="P79483"/>
<dbReference type="Reactome" id="R-HSA-202424">
    <property type="pathway name" value="Downstream TCR signaling"/>
</dbReference>
<dbReference type="Reactome" id="R-HSA-202427">
    <property type="pathway name" value="Phosphorylation of CD3 and TCR zeta chains"/>
</dbReference>
<dbReference type="Reactome" id="R-HSA-202430">
    <property type="pathway name" value="Translocation of ZAP-70 to Immunological synapse"/>
</dbReference>
<dbReference type="Reactome" id="R-HSA-202433">
    <property type="pathway name" value="Generation of second messenger molecules"/>
</dbReference>
<dbReference type="Reactome" id="R-HSA-2132295">
    <property type="pathway name" value="MHC class II antigen presentation"/>
</dbReference>
<dbReference type="Reactome" id="R-HSA-389948">
    <property type="pathway name" value="Co-inhibition by PD-1"/>
</dbReference>
<dbReference type="Reactome" id="R-HSA-877300">
    <property type="pathway name" value="Interferon gamma signaling"/>
</dbReference>
<dbReference type="SignaLink" id="P79483"/>
<dbReference type="SIGNOR" id="P79483"/>
<dbReference type="BioGRID-ORCS" id="3125">
    <property type="hits" value="0 hits in 9 CRISPR screens"/>
</dbReference>
<dbReference type="EvolutionaryTrace" id="P79483"/>
<dbReference type="GeneWiki" id="HLA-DRB3_(gene)"/>
<dbReference type="GenomeRNAi" id="3125"/>
<dbReference type="Pharos" id="P79483">
    <property type="development level" value="Tchem"/>
</dbReference>
<dbReference type="PRO" id="PR:P79483"/>
<dbReference type="Proteomes" id="UP000005640">
    <property type="component" value="Unplaced"/>
</dbReference>
<dbReference type="RNAct" id="P79483">
    <property type="molecule type" value="protein"/>
</dbReference>
<dbReference type="Bgee" id="ENSG00000196101">
    <property type="expression patterns" value="Expressed in lung and 20 other cell types or tissues"/>
</dbReference>
<dbReference type="GO" id="GO:0120281">
    <property type="term" value="C:autolysosome membrane"/>
    <property type="evidence" value="ECO:0007669"/>
    <property type="project" value="UniProtKB-SubCell"/>
</dbReference>
<dbReference type="GO" id="GO:0030669">
    <property type="term" value="C:clathrin-coated endocytic vesicle membrane"/>
    <property type="evidence" value="ECO:0000304"/>
    <property type="project" value="Reactome"/>
</dbReference>
<dbReference type="GO" id="GO:0030666">
    <property type="term" value="C:endocytic vesicle membrane"/>
    <property type="evidence" value="ECO:0000304"/>
    <property type="project" value="Reactome"/>
</dbReference>
<dbReference type="GO" id="GO:0012507">
    <property type="term" value="C:ER to Golgi transport vesicle membrane"/>
    <property type="evidence" value="ECO:0000304"/>
    <property type="project" value="Reactome"/>
</dbReference>
<dbReference type="GO" id="GO:0000139">
    <property type="term" value="C:Golgi membrane"/>
    <property type="evidence" value="ECO:0000304"/>
    <property type="project" value="Reactome"/>
</dbReference>
<dbReference type="GO" id="GO:0031902">
    <property type="term" value="C:late endosome membrane"/>
    <property type="evidence" value="ECO:0000314"/>
    <property type="project" value="UniProtKB"/>
</dbReference>
<dbReference type="GO" id="GO:0098553">
    <property type="term" value="C:lumenal side of endoplasmic reticulum membrane"/>
    <property type="evidence" value="ECO:0000304"/>
    <property type="project" value="Reactome"/>
</dbReference>
<dbReference type="GO" id="GO:0005765">
    <property type="term" value="C:lysosomal membrane"/>
    <property type="evidence" value="ECO:0000314"/>
    <property type="project" value="UniProtKB"/>
</dbReference>
<dbReference type="GO" id="GO:0016020">
    <property type="term" value="C:membrane"/>
    <property type="evidence" value="ECO:0007005"/>
    <property type="project" value="UniProtKB"/>
</dbReference>
<dbReference type="GO" id="GO:0042613">
    <property type="term" value="C:MHC class II protein complex"/>
    <property type="evidence" value="ECO:0000250"/>
    <property type="project" value="CAFA"/>
</dbReference>
<dbReference type="GO" id="GO:0005886">
    <property type="term" value="C:plasma membrane"/>
    <property type="evidence" value="ECO:0000314"/>
    <property type="project" value="UniProtKB"/>
</dbReference>
<dbReference type="GO" id="GO:0032588">
    <property type="term" value="C:trans-Golgi network membrane"/>
    <property type="evidence" value="ECO:0000304"/>
    <property type="project" value="Reactome"/>
</dbReference>
<dbReference type="GO" id="GO:0030658">
    <property type="term" value="C:transport vesicle membrane"/>
    <property type="evidence" value="ECO:0000304"/>
    <property type="project" value="Reactome"/>
</dbReference>
<dbReference type="GO" id="GO:0023026">
    <property type="term" value="F:MHC class II protein complex binding"/>
    <property type="evidence" value="ECO:0000318"/>
    <property type="project" value="GO_Central"/>
</dbReference>
<dbReference type="GO" id="GO:0032395">
    <property type="term" value="F:MHC class II receptor activity"/>
    <property type="evidence" value="ECO:0000303"/>
    <property type="project" value="UniProtKB"/>
</dbReference>
<dbReference type="GO" id="GO:0042605">
    <property type="term" value="F:peptide antigen binding"/>
    <property type="evidence" value="ECO:0000314"/>
    <property type="project" value="UniProtKB"/>
</dbReference>
<dbReference type="GO" id="GO:0002250">
    <property type="term" value="P:adaptive immune response"/>
    <property type="evidence" value="ECO:0007669"/>
    <property type="project" value="UniProtKB-KW"/>
</dbReference>
<dbReference type="GO" id="GO:0019886">
    <property type="term" value="P:antigen processing and presentation of exogenous peptide antigen via MHC class II"/>
    <property type="evidence" value="ECO:0000314"/>
    <property type="project" value="UniProtKB"/>
</dbReference>
<dbReference type="GO" id="GO:0002469">
    <property type="term" value="P:myeloid dendritic cell antigen processing and presentation"/>
    <property type="evidence" value="ECO:0000314"/>
    <property type="project" value="UniProtKB"/>
</dbReference>
<dbReference type="GO" id="GO:0002503">
    <property type="term" value="P:peptide antigen assembly with MHC class II protein complex"/>
    <property type="evidence" value="ECO:0000318"/>
    <property type="project" value="GO_Central"/>
</dbReference>
<dbReference type="GO" id="GO:2000516">
    <property type="term" value="P:positive regulation of CD4-positive, alpha-beta T cell activation"/>
    <property type="evidence" value="ECO:0000314"/>
    <property type="project" value="UniProtKB"/>
</dbReference>
<dbReference type="GO" id="GO:0050778">
    <property type="term" value="P:positive regulation of immune response"/>
    <property type="evidence" value="ECO:0000318"/>
    <property type="project" value="GO_Central"/>
</dbReference>
<dbReference type="GO" id="GO:0050870">
    <property type="term" value="P:positive regulation of T cell activation"/>
    <property type="evidence" value="ECO:0000318"/>
    <property type="project" value="GO_Central"/>
</dbReference>
<dbReference type="GO" id="GO:0002842">
    <property type="term" value="P:positive regulation of T cell mediated immune response to tumor cell"/>
    <property type="evidence" value="ECO:0000314"/>
    <property type="project" value="UniProtKB"/>
</dbReference>
<dbReference type="GO" id="GO:0007165">
    <property type="term" value="P:signal transduction"/>
    <property type="evidence" value="ECO:0000303"/>
    <property type="project" value="ProtInc"/>
</dbReference>
<dbReference type="GO" id="GO:0050852">
    <property type="term" value="P:T cell receptor signaling pathway"/>
    <property type="evidence" value="ECO:0000314"/>
    <property type="project" value="UniProtKB"/>
</dbReference>
<dbReference type="CDD" id="cd21000">
    <property type="entry name" value="IgC1_MHC_II_beta_HLA-DR"/>
    <property type="match status" value="1"/>
</dbReference>
<dbReference type="FunFam" id="2.60.40.10:FF:000116">
    <property type="entry name" value="HLA class II histocompatibility antigen, DRB1-1 beta chain"/>
    <property type="match status" value="1"/>
</dbReference>
<dbReference type="FunFam" id="3.10.320.10:FF:000001">
    <property type="entry name" value="HLA class II histocompatibility antigen, DRB1-1 beta chain"/>
    <property type="match status" value="1"/>
</dbReference>
<dbReference type="Gene3D" id="3.10.320.10">
    <property type="entry name" value="Class II Histocompatibility Antigen, M Beta Chain, Chain B, domain 1"/>
    <property type="match status" value="1"/>
</dbReference>
<dbReference type="Gene3D" id="2.60.40.10">
    <property type="entry name" value="Immunoglobulins"/>
    <property type="match status" value="1"/>
</dbReference>
<dbReference type="InterPro" id="IPR007110">
    <property type="entry name" value="Ig-like_dom"/>
</dbReference>
<dbReference type="InterPro" id="IPR036179">
    <property type="entry name" value="Ig-like_dom_sf"/>
</dbReference>
<dbReference type="InterPro" id="IPR013783">
    <property type="entry name" value="Ig-like_fold"/>
</dbReference>
<dbReference type="InterPro" id="IPR003006">
    <property type="entry name" value="Ig/MHC_CS"/>
</dbReference>
<dbReference type="InterPro" id="IPR003597">
    <property type="entry name" value="Ig_C1-set"/>
</dbReference>
<dbReference type="InterPro" id="IPR050160">
    <property type="entry name" value="MHC/Immunoglobulin"/>
</dbReference>
<dbReference type="InterPro" id="IPR011162">
    <property type="entry name" value="MHC_I/II-like_Ag-recog"/>
</dbReference>
<dbReference type="InterPro" id="IPR014745">
    <property type="entry name" value="MHC_II_a/b_N"/>
</dbReference>
<dbReference type="InterPro" id="IPR000353">
    <property type="entry name" value="MHC_II_b_N"/>
</dbReference>
<dbReference type="PANTHER" id="PTHR19944:SF84">
    <property type="entry name" value="HLA CLASS II HISTOCOMPATIBILITY ANTIGEN, DR BETA 3 CHAIN-RELATED"/>
    <property type="match status" value="1"/>
</dbReference>
<dbReference type="PANTHER" id="PTHR19944">
    <property type="entry name" value="MHC CLASS II-RELATED"/>
    <property type="match status" value="1"/>
</dbReference>
<dbReference type="Pfam" id="PF07654">
    <property type="entry name" value="C1-set"/>
    <property type="match status" value="1"/>
</dbReference>
<dbReference type="Pfam" id="PF00969">
    <property type="entry name" value="MHC_II_beta"/>
    <property type="match status" value="1"/>
</dbReference>
<dbReference type="SMART" id="SM00407">
    <property type="entry name" value="IGc1"/>
    <property type="match status" value="1"/>
</dbReference>
<dbReference type="SMART" id="SM00921">
    <property type="entry name" value="MHC_II_beta"/>
    <property type="match status" value="1"/>
</dbReference>
<dbReference type="SUPFAM" id="SSF48726">
    <property type="entry name" value="Immunoglobulin"/>
    <property type="match status" value="1"/>
</dbReference>
<dbReference type="SUPFAM" id="SSF54452">
    <property type="entry name" value="MHC antigen-recognition domain"/>
    <property type="match status" value="1"/>
</dbReference>
<dbReference type="PROSITE" id="PS50835">
    <property type="entry name" value="IG_LIKE"/>
    <property type="match status" value="1"/>
</dbReference>
<dbReference type="PROSITE" id="PS00290">
    <property type="entry name" value="IG_MHC"/>
    <property type="match status" value="1"/>
</dbReference>
<gene>
    <name type="primary">HLA-DRB3</name>
</gene>
<reference key="1">
    <citation type="journal article" date="1983" name="EMBO J.">
        <title>Complete sequence of an HLA-DR beta chain deduced from a cDNA clone and identification of multiple non-allelic DR beta chain genes.</title>
        <authorList>
            <person name="Long E.O."/>
            <person name="Wake C.T."/>
            <person name="Gorski J."/>
            <person name="Mach B."/>
        </authorList>
    </citation>
    <scope>NUCLEOTIDE SEQUENCE [MRNA] (ALLELE DRB3*02:01)</scope>
</reference>
<reference key="2">
    <citation type="journal article" date="1986" name="Nature">
        <title>Polymorphism of human Ia antigens: gene conversion between two DR beta loci results in a new HLA-D/DR specificity.</title>
        <authorList>
            <person name="Gorski J."/>
            <person name="Mach B."/>
        </authorList>
    </citation>
    <scope>NUCLEOTIDE SEQUENCE [GENOMIC DNA] (ALLELE DRB3*01:01)</scope>
</reference>
<reference key="3">
    <citation type="journal article" date="1997" name="Tissue Antigens">
        <title>Description of two new HLA-DRB alleles (DRB1*0310 and DRB3*01012) found in a Spanish infant.</title>
        <authorList>
            <person name="Martinez-Quiles N."/>
            <person name="Martin-Villa J.M."/>
            <person name="Martinez-Laso J."/>
            <person name="Perez-Blas M."/>
            <person name="Ferre-Lopez S."/>
            <person name="Moreno-Pelayo M.A."/>
            <person name="Alvarez-Tejado M."/>
            <person name="Arnaiz-Villena A."/>
        </authorList>
    </citation>
    <scope>NUCLEOTIDE SEQUENCE [MRNA] (ALLELE DRB3*01:01)</scope>
    <source>
        <tissue>Blood</tissue>
    </source>
</reference>
<reference key="4">
    <citation type="journal article" date="2000" name="Tissue Antigens">
        <title>DRB3 alleles with variations in the annealing sites of commonly used amplification primers.</title>
        <authorList>
            <person name="Coquillard G.J."/>
            <person name="Tang T.F."/>
            <person name="Steiner N."/>
            <person name="Perlee L."/>
            <person name="Ng J."/>
            <person name="Hartzman R.J."/>
            <person name="Hurley C.K."/>
        </authorList>
    </citation>
    <scope>NUCLEOTIDE SEQUENCE [MRNA] (ALLELE DRB3*01:01)</scope>
    <scope>NUCLEOTIDE SEQUENCE [GENOMIC DNA] OF 35-119 (ALLELE DRB3*01:04)</scope>
    <source>
        <tissue>Blood</tissue>
    </source>
</reference>
<reference key="5">
    <citation type="submission" date="1997-03" db="EMBL/GenBank/DDBJ databases">
        <title>Cloning and nucleotide sequence analysis of HLA-DRB3*01012 from EBV-transformed Korean B-cell line by sequence based typing.</title>
        <authorList>
            <person name="Kim K.H."/>
            <person name="Kang J.H."/>
            <person name="Maeng C.Y."/>
            <person name="Han H."/>
            <person name="Park J.H."/>
            <person name="Hahm K.S."/>
            <person name="Kim K.L."/>
        </authorList>
    </citation>
    <scope>NUCLEOTIDE SEQUENCE [MRNA] (ALLELE DRB3*01:01)</scope>
</reference>
<reference key="6">
    <citation type="submission" date="2002-07" db="EMBL/GenBank/DDBJ databases">
        <title>HLA-DRB3*03011 sequence complete mRNA.</title>
        <authorList>
            <person name="Spierings E."/>
            <person name="Zegveld S.T."/>
            <person name="Goulmy E."/>
        </authorList>
    </citation>
    <scope>NUCLEOTIDE SEQUENCE [MRNA] (ALLELE DRB3*03:01)</scope>
</reference>
<reference key="7">
    <citation type="patent" date="1984-03-28" number="EP0103960">
        <title>DNA sequences coding for the DR beta-chain locus of the human lymphocyte antigen complex and polypeptides, diagnostic typing processes and products related thereto.</title>
        <authorList>
            <person name="Mach B.F."/>
            <person name="Long E.O."/>
            <person name="Wake C.T."/>
        </authorList>
    </citation>
    <scope>NUCLEOTIDE SEQUENCE [MRNA] (ALLELE DRB3*02:01)</scope>
</reference>
<reference key="8">
    <citation type="journal article" date="2003" name="Nature">
        <title>The DNA sequence and analysis of human chromosome 6.</title>
        <authorList>
            <person name="Mungall A.J."/>
            <person name="Palmer S.A."/>
            <person name="Sims S.K."/>
            <person name="Edwards C.A."/>
            <person name="Ashurst J.L."/>
            <person name="Wilming L."/>
            <person name="Jones M.C."/>
            <person name="Horton R."/>
            <person name="Hunt S.E."/>
            <person name="Scott C.E."/>
            <person name="Gilbert J.G.R."/>
            <person name="Clamp M.E."/>
            <person name="Bethel G."/>
            <person name="Milne S."/>
            <person name="Ainscough R."/>
            <person name="Almeida J.P."/>
            <person name="Ambrose K.D."/>
            <person name="Andrews T.D."/>
            <person name="Ashwell R.I.S."/>
            <person name="Babbage A.K."/>
            <person name="Bagguley C.L."/>
            <person name="Bailey J."/>
            <person name="Banerjee R."/>
            <person name="Barker D.J."/>
            <person name="Barlow K.F."/>
            <person name="Bates K."/>
            <person name="Beare D.M."/>
            <person name="Beasley H."/>
            <person name="Beasley O."/>
            <person name="Bird C.P."/>
            <person name="Blakey S.E."/>
            <person name="Bray-Allen S."/>
            <person name="Brook J."/>
            <person name="Brown A.J."/>
            <person name="Brown J.Y."/>
            <person name="Burford D.C."/>
            <person name="Burrill W."/>
            <person name="Burton J."/>
            <person name="Carder C."/>
            <person name="Carter N.P."/>
            <person name="Chapman J.C."/>
            <person name="Clark S.Y."/>
            <person name="Clark G."/>
            <person name="Clee C.M."/>
            <person name="Clegg S."/>
            <person name="Cobley V."/>
            <person name="Collier R.E."/>
            <person name="Collins J.E."/>
            <person name="Colman L.K."/>
            <person name="Corby N.R."/>
            <person name="Coville G.J."/>
            <person name="Culley K.M."/>
            <person name="Dhami P."/>
            <person name="Davies J."/>
            <person name="Dunn M."/>
            <person name="Earthrowl M.E."/>
            <person name="Ellington A.E."/>
            <person name="Evans K.A."/>
            <person name="Faulkner L."/>
            <person name="Francis M.D."/>
            <person name="Frankish A."/>
            <person name="Frankland J."/>
            <person name="French L."/>
            <person name="Garner P."/>
            <person name="Garnett J."/>
            <person name="Ghori M.J."/>
            <person name="Gilby L.M."/>
            <person name="Gillson C.J."/>
            <person name="Glithero R.J."/>
            <person name="Grafham D.V."/>
            <person name="Grant M."/>
            <person name="Gribble S."/>
            <person name="Griffiths C."/>
            <person name="Griffiths M.N.D."/>
            <person name="Hall R."/>
            <person name="Halls K.S."/>
            <person name="Hammond S."/>
            <person name="Harley J.L."/>
            <person name="Hart E.A."/>
            <person name="Heath P.D."/>
            <person name="Heathcott R."/>
            <person name="Holmes S.J."/>
            <person name="Howden P.J."/>
            <person name="Howe K.L."/>
            <person name="Howell G.R."/>
            <person name="Huckle E."/>
            <person name="Humphray S.J."/>
            <person name="Humphries M.D."/>
            <person name="Hunt A.R."/>
            <person name="Johnson C.M."/>
            <person name="Joy A.A."/>
            <person name="Kay M."/>
            <person name="Keenan S.J."/>
            <person name="Kimberley A.M."/>
            <person name="King A."/>
            <person name="Laird G.K."/>
            <person name="Langford C."/>
            <person name="Lawlor S."/>
            <person name="Leongamornlert D.A."/>
            <person name="Leversha M."/>
            <person name="Lloyd C.R."/>
            <person name="Lloyd D.M."/>
            <person name="Loveland J.E."/>
            <person name="Lovell J."/>
            <person name="Martin S."/>
            <person name="Mashreghi-Mohammadi M."/>
            <person name="Maslen G.L."/>
            <person name="Matthews L."/>
            <person name="McCann O.T."/>
            <person name="McLaren S.J."/>
            <person name="McLay K."/>
            <person name="McMurray A."/>
            <person name="Moore M.J.F."/>
            <person name="Mullikin J.C."/>
            <person name="Niblett D."/>
            <person name="Nickerson T."/>
            <person name="Novik K.L."/>
            <person name="Oliver K."/>
            <person name="Overton-Larty E.K."/>
            <person name="Parker A."/>
            <person name="Patel R."/>
            <person name="Pearce A.V."/>
            <person name="Peck A.I."/>
            <person name="Phillimore B.J.C.T."/>
            <person name="Phillips S."/>
            <person name="Plumb R.W."/>
            <person name="Porter K.M."/>
            <person name="Ramsey Y."/>
            <person name="Ranby S.A."/>
            <person name="Rice C.M."/>
            <person name="Ross M.T."/>
            <person name="Searle S.M."/>
            <person name="Sehra H.K."/>
            <person name="Sheridan E."/>
            <person name="Skuce C.D."/>
            <person name="Smith S."/>
            <person name="Smith M."/>
            <person name="Spraggon L."/>
            <person name="Squares S.L."/>
            <person name="Steward C.A."/>
            <person name="Sycamore N."/>
            <person name="Tamlyn-Hall G."/>
            <person name="Tester J."/>
            <person name="Theaker A.J."/>
            <person name="Thomas D.W."/>
            <person name="Thorpe A."/>
            <person name="Tracey A."/>
            <person name="Tromans A."/>
            <person name="Tubby B."/>
            <person name="Wall M."/>
            <person name="Wallis J.M."/>
            <person name="West A.P."/>
            <person name="White S.S."/>
            <person name="Whitehead S.L."/>
            <person name="Whittaker H."/>
            <person name="Wild A."/>
            <person name="Willey D.J."/>
            <person name="Wilmer T.E."/>
            <person name="Wood J.M."/>
            <person name="Wray P.W."/>
            <person name="Wyatt J.C."/>
            <person name="Young L."/>
            <person name="Younger R.M."/>
            <person name="Bentley D.R."/>
            <person name="Coulson A."/>
            <person name="Durbin R.M."/>
            <person name="Hubbard T."/>
            <person name="Sulston J.E."/>
            <person name="Dunham I."/>
            <person name="Rogers J."/>
            <person name="Beck S."/>
        </authorList>
    </citation>
    <scope>NUCLEOTIDE SEQUENCE [LARGE SCALE GENOMIC DNA] (ALLELES DRB3*01:01 AND DRB3*02:02)</scope>
</reference>
<reference key="9">
    <citation type="journal article" date="2004" name="Genome Res.">
        <title>The status, quality, and expansion of the NIH full-length cDNA project: the Mammalian Gene Collection (MGC).</title>
        <authorList>
            <consortium name="The MGC Project Team"/>
        </authorList>
    </citation>
    <scope>NUCLEOTIDE SEQUENCE [LARGE SCALE MRNA] (ALLELES DRB3*01:01 AND DRB3*02:02)</scope>
    <source>
        <tissue>Brain</tissue>
    </source>
</reference>
<reference key="10">
    <citation type="journal article" date="1983" name="Hum. Immunol.">
        <title>Molecular analysis of the genes for human class II antigens of the major histocompatibility complex.</title>
        <authorList>
            <person name="Long E.O."/>
            <person name="Gorski J."/>
            <person name="Rollini P."/>
            <person name="Wake C.T."/>
            <person name="Strubin M."/>
            <person name="Rabourdin-Combe C."/>
            <person name="Mach B."/>
        </authorList>
    </citation>
    <scope>NUCLEOTIDE SEQUENCE [MRNA] OF 30-266 (ALLELE DRB3*02:01)</scope>
</reference>
<reference key="11">
    <citation type="journal article" date="1987" name="Proc. Natl. Acad. Sci. U.S.A.">
        <title>Allelic variation in the DR subregion of the human major histocompatibility complex.</title>
        <authorList>
            <person name="Bell J.I."/>
            <person name="Denney D. Jr."/>
            <person name="Foster L."/>
            <person name="Belt T.K."/>
            <person name="Todd J.A."/>
            <person name="McDevitt H.O."/>
        </authorList>
    </citation>
    <scope>NUCLEOTIDE SEQUENCE [MRNA] OF 30-266 (ALLELE DRB3*02:01)</scope>
</reference>
<reference key="12">
    <citation type="journal article" date="2000" name="Tissue Antigens">
        <title>Identification by sequencing based typing and complete coding region analysis of three new HLA class II alleles: DRB3*0210, DRB3*0211 and DQB1*0310.</title>
        <authorList>
            <person name="Balas A."/>
            <person name="Santos S."/>
            <person name="Aviles M.J."/>
            <person name="Garcia-Sanchez F."/>
            <person name="Lillo R."/>
            <person name="Vicario J.L."/>
        </authorList>
    </citation>
    <scope>NUCLEOTIDE SEQUENCE [MRNA] OF 30-266 (ALLELES DRB3*02:10 AND DRB3*02:11)</scope>
</reference>
<reference key="13">
    <citation type="submission" date="2008-12" db="EMBL/GenBank/DDBJ databases">
        <title>A new HLA-DRB3*02 allele identified by sequencing based typing.</title>
        <authorList>
            <person name="Westerink N."/>
            <person name="Bacelar M."/>
            <person name="Arts-Hilkes Y."/>
            <person name="Mulder W."/>
            <person name="Rozemuller E.H."/>
        </authorList>
    </citation>
    <scope>NUCLEOTIDE SEQUENCE [GENOMIC DNA] OF 35-217 (ALLELE DRB3*02:24)</scope>
</reference>
<reference key="14">
    <citation type="journal article" date="2004" name="Tissue Antigens">
        <title>Sequencing of two new HLA class II alleles: DRB3*0218 and DQB1*030202.</title>
        <authorList>
            <person name="Balas A."/>
            <person name="Aviles M.J."/>
            <person name="Lillo R."/>
            <person name="Alonso-Nieto M."/>
            <person name="Zarapuz L."/>
            <person name="Garcia-Villaescusa R."/>
            <person name="Garcia-Sanchez F."/>
            <person name="Vicario J.L."/>
        </authorList>
    </citation>
    <scope>NUCLEOTIDE SEQUENCE [GENOMIC DNA] OF 35-124 (ALLELE DRB3*02:18)</scope>
</reference>
<reference key="15">
    <citation type="journal article" date="2000" name="Tissue Antigens">
        <title>Identification of a new DRB3*02 allelic variant (DRB3*0209) by high-resolution sequence-based typing.</title>
        <authorList>
            <person name="Morabito A."/>
            <person name="Pera C."/>
            <person name="Longo A."/>
            <person name="Delfino L."/>
            <person name="Ferrara G.B."/>
        </authorList>
    </citation>
    <scope>NUCLEOTIDE SEQUENCE [GENOMIC DNA] OF 35-123 (ALLELE DRB3*02:09)</scope>
</reference>
<reference key="16">
    <citation type="journal article" date="2002" name="Tissue Antigens">
        <title>Description of fourteen new DRB alleles found in a stem cell donor registry.</title>
        <authorList>
            <person name="Tang T.F."/>
            <person name="Lin Y.-S."/>
            <person name="Robbins F.M."/>
            <person name="Li L."/>
            <person name="Sintasath D."/>
            <person name="Coquillard G."/>
            <person name="Huang A."/>
            <person name="Heine U."/>
            <person name="Ng J."/>
            <person name="Hartzman R.J."/>
            <person name="Hurley C.K."/>
        </authorList>
    </citation>
    <scope>NUCLEOTIDE SEQUENCE [GENOMIC DNA] OF 35-123 (ALLELE DRB3*01:05)</scope>
</reference>
<reference key="17">
    <citation type="journal article" date="2004" name="Tissue Antigens">
        <title>Three new DRB alleles routinely identified by sequence-based typing: DRB1*010103, DRB1*0326 and DRB3*0219.</title>
        <authorList>
            <person name="Dubois V."/>
            <person name="Favre-Victoire I."/>
            <person name="Gebuhrer L."/>
        </authorList>
    </citation>
    <scope>NUCLEOTIDE SEQUENCE [GENOMIC DNA] OF 35-123 (ALLELE DRB3*02:19)</scope>
</reference>
<reference key="18">
    <citation type="journal article" date="2008" name="Tissue Antigens">
        <title>Characterisation of two novel HLA alleles, HLA-Cw*0429 and HLA-DRB3*0223.</title>
        <authorList>
            <person name="Danzer M."/>
            <person name="Polin H."/>
            <person name="Hofer K."/>
            <person name="Proll J."/>
            <person name="Gabriel C."/>
        </authorList>
    </citation>
    <scope>NUCLEOTIDE SEQUENCE [GENOMIC DNA] OF 35-123 (ALLELE DRB3*02:23)</scope>
    <source>
        <tissue>Peripheral blood</tissue>
    </source>
</reference>
<reference key="19">
    <citation type="journal article" date="2009" name="Tissue Antigens">
        <title>Description of three novel HLA-DRB3 alleles: DRB3*010105, DRB3*0112 and DRB3*0113.</title>
        <authorList>
            <person name="Lee K.W."/>
            <person name="Jung Y.A."/>
        </authorList>
    </citation>
    <scope>NUCLEOTIDE SEQUENCE [GENOMIC DNA] OF 35-123 (ALLELES DRB3*01:01; DRB3*01:12 AND DRB3*01:13)</scope>
</reference>
<reference key="20">
    <citation type="submission" date="1996-04" db="EMBL/GenBank/DDBJ databases">
        <title>New DRB3*02 variant.</title>
        <authorList>
            <person name="Keller E."/>
        </authorList>
    </citation>
    <scope>NUCLEOTIDE SEQUENCE [GENOMIC DNA] OF 35-123 (ALLELE DRB3*02:04)</scope>
</reference>
<reference key="21">
    <citation type="submission" date="1999-11" db="EMBL/GenBank/DDBJ databases">
        <title>An HLA-DRB3 allele detected by SBT.</title>
        <authorList>
            <person name="Greville W.D."/>
            <person name="Ng G."/>
            <person name="Kennedy A."/>
            <person name="Dunckley H."/>
        </authorList>
    </citation>
    <scope>NUCLEOTIDE SEQUENCE [GENOMIC DNA] OF 35-123 (ALLELES DRB3*02:12 AND DRB3*02:13)</scope>
</reference>
<reference key="22">
    <citation type="submission" date="2001-01" db="EMBL/GenBank/DDBJ databases">
        <title>A new HLA DRB3* allele very similar to DRB3*02021 and DRB3*0212 alleles.</title>
        <authorList>
            <person name="Moine A."/>
        </authorList>
    </citation>
    <scope>NUCLEOTIDE SEQUENCE [GENOMIC DNA] OF 35-123 (ALLELE DRB3*02:14)</scope>
</reference>
<reference key="23">
    <citation type="submission" date="2001-10" db="EMBL/GenBank/DDBJ databases">
        <title>A novel DRB3 allele.</title>
        <authorList>
            <person name="Varney M."/>
        </authorList>
    </citation>
    <scope>NUCLEOTIDE SEQUENCE [GENOMIC DNA] OF 35-123 (ALLELE DRB3*02:15)</scope>
</reference>
<reference key="24">
    <citation type="submission" date="2001-12" db="EMBL/GenBank/DDBJ databases">
        <title>Identification of a novel DRB3*0216 allele.</title>
        <authorList>
            <person name="Avergas C.U."/>
            <person name="Iglehart B.A."/>
            <person name="Leffell M.S."/>
        </authorList>
    </citation>
    <scope>NUCLEOTIDE SEQUENCE [GENOMIC DNA] OF 35-123 (ALLELE DRB3*02:16)</scope>
</reference>
<reference key="25">
    <citation type="submission" date="2001-12" db="EMBL/GenBank/DDBJ databases">
        <title>Novel HLA-DRB3 allele revealed by sequencing based typing.</title>
        <authorList>
            <person name="Hogbin J.-P."/>
            <person name="Chapman G."/>
            <person name="Greville W.D."/>
        </authorList>
    </citation>
    <scope>NUCLEOTIDE SEQUENCE [GENOMIC DNA] OF 35-123 (ALLELE DRB3*02:17)</scope>
</reference>
<reference key="26">
    <citation type="submission" date="2003-09" db="EMBL/GenBank/DDBJ databases">
        <title>Description of a new DRB3* allele.</title>
        <authorList>
            <person name="Perasaari J."/>
            <person name="Egle Jansson I."/>
            <person name="Partanen J."/>
            <person name="Bengtsson M."/>
        </authorList>
    </citation>
    <scope>NUCLEOTIDE SEQUENCE [GENOMIC DNA] OF 35-123 (ALLELE DRB3*01:11)</scope>
</reference>
<reference key="27">
    <citation type="submission" date="2005-03" db="EMBL/GenBank/DDBJ databases">
        <title>New HLA-DRB3*02 allele.</title>
        <authorList>
            <person name="Colombini I."/>
            <person name="Malagoli A."/>
            <person name="Carella G."/>
        </authorList>
    </citation>
    <scope>NUCLEOTIDE SEQUENCE [GENOMIC DNA] OF 35-123 (ALLELE DRB3*02:20)</scope>
</reference>
<reference key="28">
    <citation type="submission" date="2005-12" db="EMBL/GenBank/DDBJ databases">
        <title>New HLA-DRB3*02 allelic variant identified by high resolution sequence-based typing.</title>
        <authorList>
            <person name="Garino E."/>
            <person name="Berrino M."/>
            <person name="Bertinetto F."/>
            <person name="Brancatello F."/>
            <person name="Caropreso P."/>
            <person name="Chidichimo R."/>
            <person name="Frisaldi E."/>
            <person name="Mazzola G."/>
            <person name="Panniello M."/>
            <person name="Tondat F."/>
            <person name="Locatelli F."/>
            <person name="Amoroso A."/>
        </authorList>
    </citation>
    <scope>NUCLEOTIDE SEQUENCE [GENOMIC DNA] OF 35-123 (ALLELE DRB3*02:21)</scope>
</reference>
<reference key="29">
    <citation type="submission" date="2006-11" db="EMBL/GenBank/DDBJ databases">
        <title>The DRB3 new allele is identical to the current HLA-DRB3*020201 allele except a point substitution at codon 74 where a G is found in place of A.</title>
        <authorList>
            <person name="Dormoy A."/>
            <person name="Froelich N."/>
        </authorList>
    </citation>
    <scope>NUCLEOTIDE SEQUENCE [GENOMIC DNA] OF 35-123 (ALLELES DRB3*02:22)</scope>
</reference>
<reference key="30">
    <citation type="submission" date="2009-06" db="EMBL/GenBank/DDBJ databases">
        <title>The new DRB3 allele is identical to the DRB3*020201 allele except a mutation at position 266 leading to the change of the amino acid 65 (Tyr (TAC) -&gt; Ser(TCC).</title>
        <authorList>
            <person name="Dormoy A."/>
            <person name="Derin R."/>
            <person name="Jollet I."/>
            <person name="Weschler B."/>
            <person name="Leisenbach R."/>
        </authorList>
    </citation>
    <scope>NUCLEOTIDE SEQUENCE [GENOMIC DNA] OF 35-123 (ALLELE DRB3*02:25)</scope>
    <source>
        <tissue>Peripheral blood</tissue>
    </source>
</reference>
<reference key="31">
    <citation type="submission" date="2009-06" db="EMBL/GenBank/DDBJ databases">
        <title>Identification of a novel HLA-DRB3*01 allele containing a DRB1 sequence motive by micro-TGGE and confirmed by cloning and direct sequencing.</title>
        <authorList>
            <person name="Garritsen H.S.P."/>
            <person name="Fae I."/>
            <person name="Legath N."/>
            <person name="Hannig H."/>
            <person name="Fischer G.F."/>
        </authorList>
    </citation>
    <scope>NUCLEOTIDE SEQUENCE [GENOMIC DNA] OF 35-123 (ALLELE DRB3*01:14)</scope>
</reference>
<reference key="32">
    <citation type="submission" date="1999-08" db="EMBL/GenBank/DDBJ databases">
        <title>New HLA class II (DRB3) allele detected by sequencing-based typing.</title>
        <authorList>
            <person name="Greville W.D."/>
            <person name="Ng G."/>
            <person name="Kennedy A."/>
            <person name="Dunckley H."/>
        </authorList>
    </citation>
    <scope>NUCLEOTIDE SEQUENCE [GENOMIC DNA] OF 35-122 (ALLELE DRB3*02:02)</scope>
</reference>
<reference key="33">
    <citation type="submission" date="2001-03" db="EMBL/GenBank/DDBJ databases">
        <title>Description of a new HLA-DRB3 allele in a Spanish bone marrow donor.</title>
        <authorList>
            <person name="Loeliger C."/>
        </authorList>
    </citation>
    <scope>NUCLEOTIDE SEQUENCE [GENOMIC DNA] OF 35-122 (ALLELE DRB3*01:08)</scope>
    <source>
        <tissue>Bone marrow</tissue>
    </source>
</reference>
<reference key="34">
    <citation type="submission" date="2001-06" db="EMBL/GenBank/DDBJ databases">
        <title>Novel HLA*DRB3 allele.</title>
        <authorList>
            <person name="Li L."/>
            <person name="Hurley C.K."/>
        </authorList>
    </citation>
    <scope>NUCLEOTIDE SEQUENCE [GENOMIC DNA] OF 35-122 (ALLELE DRB3*01:09)</scope>
</reference>
<reference key="35">
    <citation type="journal article" date="1997" name="Immunogenetics">
        <title>Diversity associated with the second expressed HLA-DRB locus in the human population.</title>
        <authorList>
            <person name="Robbins F."/>
            <person name="Hurley C.K."/>
            <person name="Tang T."/>
            <person name="Yao H."/>
            <person name="Lin Y.S."/>
            <person name="Wade J."/>
            <person name="Goeken N."/>
            <person name="Hartzman R.J."/>
        </authorList>
    </citation>
    <scope>NUCLEOTIDE SEQUENCE [GENOMIC DNA] OF 35-121 (ALLELE DRB3*02:05)</scope>
</reference>
<reference key="36">
    <citation type="submission" date="1997-03" db="EMBL/GenBank/DDBJ databases">
        <authorList>
            <person name="Olerup O."/>
        </authorList>
    </citation>
    <scope>NUCLEOTIDE SEQUENCE [GENOMIC DNA] OF 35-117 (ALLELE DRB3*01:03)</scope>
</reference>
<reference key="37">
    <citation type="journal article" date="1997" name="Tissue Antigens">
        <title>Identification of new DRB1*01 (DRB1*01022), DRB1*14 (DRB1*1428) and DRB3* (DRB3*0206) alleles.</title>
        <authorList>
            <person name="Hashemi-Tavoularis S."/>
            <person name="Couture C."/>
            <person name="Buyse I.M."/>
        </authorList>
    </citation>
    <scope>NUCLEOTIDE SEQUENCE [GENOMIC DNA] OF 35-115 (ALLELE DRB3*02:06)</scope>
</reference>
<reference key="38">
    <citation type="journal article" date="1998" name="Tissue Antigens">
        <title>A novel DRB3 allele (DRB3*0208), a new allelic variant of DRB1*1502 (DRB1*15023) and two new DQB1 (DQB1*03012 and DQB1*0614) alleles.</title>
        <authorList>
            <person name="Hashemi-tavoularis S."/>
            <person name="Ouellet S."/>
            <person name="Sengar D.P.S."/>
            <person name="Buyse I.M."/>
        </authorList>
    </citation>
    <scope>NUCLEOTIDE SEQUENCE [GENOMIC DNA] OF 35-115 (ALLELES DRB3*02:08 AND DRB3*03:02)</scope>
    <source>
        <tissue>Blood</tissue>
    </source>
</reference>
<reference key="39">
    <citation type="journal article" date="2001" name="Tissue Antigens">
        <title>Identification of three new DRB3* (DRB3*0106, DRB3*0107 and DRB3*02022) alleles.</title>
        <authorList>
            <person name="Tavoularis S."/>
            <person name="Ouellet S."/>
            <person name="Stephens S."/>
        </authorList>
    </citation>
    <scope>NUCLEOTIDE SEQUENCE [GENOMIC DNA] OF 35-115 (ALLELES DRB3*01:06 AND DRB3*01:07)</scope>
    <source>
        <tissue>Peripheral blood</tissue>
    </source>
</reference>
<reference key="40">
    <citation type="journal article" date="2004" name="Tissue Antigens">
        <title>Identification of three novel alleles: DRB3*0110, DRB1*1140, and DRB1*140102.</title>
        <authorList>
            <person name="Tavoularis S."/>
            <person name="Couture C."/>
            <person name="Ribeiro-Barros E."/>
        </authorList>
    </citation>
    <scope>NUCLEOTIDE SEQUENCE [GENOMIC DNA] OF 35-115 (ALLELE DRB3*01:10)</scope>
    <source>
        <tissue>Peripheral blood</tissue>
    </source>
</reference>
<reference key="41">
    <citation type="journal article" date="1999" name="Tissue Antigens">
        <title>New HLA class II alleles in the Indonesian population.</title>
        <authorList>
            <person name="Panigoro R."/>
            <person name="Greville W.D."/>
            <person name="Kennedy A."/>
            <person name="Trejaut J."/>
            <person name="Dunckley H."/>
        </authorList>
    </citation>
    <scope>NUCLEOTIDE SEQUENCE [GENOMIC DNA] OF 36-119 (ALLELE DRB3*03:03)</scope>
</reference>
<reference key="42">
    <citation type="journal article" date="1997" name="Tissue Antigens">
        <title>Identification and nucleotide sequence of two novel DRB3 alleles, DRB3*0102 and DRB3*010133.</title>
        <authorList>
            <person name="Guttridge M.G."/>
            <person name="Hudson L."/>
            <person name="Williams H."/>
            <person name="Dunn P."/>
            <person name="Duy S."/>
            <person name="Darke C."/>
        </authorList>
    </citation>
    <scope>NUCLEOTIDE SEQUENCE [GENOMIC DNA] OF 36-117 (ALLELE DRB3*01:02)</scope>
</reference>
<reference key="43">
    <citation type="journal article" date="1997" name="Tissue Antigens">
        <title>Identification of a new DRB3*02 allele (DRB3*0207) by sequence-based typing.</title>
        <authorList>
            <person name="Voorter C.E."/>
            <person name="Hentges F."/>
            <person name="van den Berg-Loonen E.M."/>
        </authorList>
    </citation>
    <scope>NUCLEOTIDE SEQUENCE [GENOMIC DNA] OF 37-116 (ALLELE DRB3*02:07)</scope>
</reference>
<reference key="44">
    <citation type="submission" date="1995-05" db="EMBL/GenBank/DDBJ databases">
        <title>Five new DRB1 alleles found during routine DRB oligotyping.</title>
        <authorList>
            <person name="Anholts J.D.H."/>
            <person name="Verduijn W."/>
            <person name="Schreuder G.M.T."/>
        </authorList>
    </citation>
    <scope>NUCLEOTIDE SEQUENCE [GENOMIC DNA] OF 37-116 (ALLELE DRB3*02:03)</scope>
</reference>
<reference key="45">
    <citation type="submission" date="1999-05" db="EMBL/GenBank/DDBJ databases">
        <title>Identification of a putative DR8 founder haplotype containing a novel DRB1*0801 allele.</title>
        <authorList>
            <person name="Eberle M."/>
            <person name="Asu U."/>
            <person name="Taylor M."/>
            <person name="Hunter J.B."/>
            <person name="Fuller T.C."/>
            <person name="Maurer D."/>
        </authorList>
    </citation>
    <scope>NUCLEOTIDE SEQUENCE [GENOMIC DNA] OF 43-120 (ALLELE DRB3*02:02)</scope>
</reference>
<reference key="46">
    <citation type="journal article" date="1989" name="J. Immunol.">
        <title>HLA-DR beta-chain polymorphism. Second domain polymorphism reflects evolutionary relatedness of alleles and may explain public serologic epitopes.</title>
        <authorList>
            <person name="Gorski J."/>
        </authorList>
    </citation>
    <scope>NUCLEOTIDE SEQUENCE [MRNA] OF 124-217 (ALLELE DRB3*01:01/DRB3*01:02)</scope>
</reference>
<reference key="47">
    <citation type="journal article" date="1989" name="J. Exp. Med.">
        <title>Correlation of structure with T cell responses of the three members of the HLA-DRw52 allelic series.</title>
        <authorList>
            <person name="Gorski J."/>
            <person name="Irle C."/>
            <person name="Mickelson E.M."/>
            <person name="Sheehy M.J."/>
            <person name="Termijtelen A."/>
            <person name="Ucla C."/>
            <person name="Mach B."/>
        </authorList>
    </citation>
    <scope>FUNCTION (ALLELES DRB3*01:01; DRB3*02:02 AND DRB3*03:01)</scope>
</reference>
<reference key="48">
    <citation type="journal article" date="1989" name="J. Immunol.">
        <title>Delineation of several DR-restricted tetanus toxin T cell epitopes.</title>
        <authorList>
            <person name="Demotz S."/>
            <person name="Lanzavecchia A."/>
            <person name="Eisel U."/>
            <person name="Niemann H."/>
            <person name="Widmann C."/>
            <person name="Corradin G."/>
        </authorList>
    </citation>
    <scope>FUNCTION (ALLELE DRB3*01:01)</scope>
</reference>
<reference key="49">
    <citation type="journal article" date="2003" name="Lancet">
        <title>Identification of HLA class II-restricted H-Y-specific T-helper epitope evoking CD4+ T-helper cells in H-Y-mismatched transplantation.</title>
        <authorList>
            <person name="Spierings E."/>
            <person name="Vermeulen C.J."/>
            <person name="Vogt M.H."/>
            <person name="Doerner L.E."/>
            <person name="Falkenburg J.H."/>
            <person name="Mutis T."/>
            <person name="Goulmy E."/>
        </authorList>
    </citation>
    <scope>ASSOCIATION OF ALLELE DRB3*03:01 WITH HLA-IDENTICAL SEX-MISMATCHED GRAFT REJECTION</scope>
    <scope>POLYMORPHISM</scope>
</reference>
<reference key="50">
    <citation type="journal article" date="2005" name="J. Immunol.">
        <title>Broad repertoire of the CD4+ Th cell response in spontaneously controlled hepatitis C virus infection includes dominant and highly promiscuous epitopes.</title>
        <authorList>
            <person name="Schulze zur Wiesch J."/>
            <person name="Lauer G.M."/>
            <person name="Day C.L."/>
            <person name="Kim A.Y."/>
            <person name="Ouchi K."/>
            <person name="Duncan J.E."/>
            <person name="Wurcel A.G."/>
            <person name="Timm J."/>
            <person name="Jones A.M."/>
            <person name="Mothe B."/>
            <person name="Allen T.M."/>
            <person name="McGovern B."/>
            <person name="Lewis-Ximenez L."/>
            <person name="Sidney J."/>
            <person name="Sette A."/>
            <person name="Chung R.T."/>
            <person name="Walker B.D."/>
        </authorList>
    </citation>
    <scope>FUNCTION (ALLELE DRB3*03:01)</scope>
</reference>
<reference key="51">
    <citation type="journal article" date="2008" name="Proc. Natl. Acad. Sci. U.S.A.">
        <title>MHC class II stabilization at the surface of human dendritic cells is the result of maturation-dependent MARCH I down-regulation.</title>
        <authorList>
            <person name="De Gassart A."/>
            <person name="Camosseto V."/>
            <person name="Thibodeau J."/>
            <person name="Ceppi M."/>
            <person name="Catalan N."/>
            <person name="Pierre P."/>
            <person name="Gatti E."/>
        </authorList>
    </citation>
    <scope>UBIQUITINATION BY MARCHF1</scope>
    <scope>SUBCELLULAR LOCATION</scope>
</reference>
<reference key="52">
    <citation type="journal article" date="2009" name="Blood">
        <title>Naturally processed peptides spanning the HPA-1a polymorphism are efficiently generated and displayed from platelet glycoprotein by HLA-DRB3*0101-positive antigen-presenting cells.</title>
        <authorList>
            <person name="Anani Sarab G."/>
            <person name="Moss M."/>
            <person name="Barker R.N."/>
            <person name="Urbaniak S.J."/>
        </authorList>
    </citation>
    <scope>IDENTIFICATION OF THE ALLOANTIGEN HPA-1A BY MASS SPECTROMETRY</scope>
    <scope>ASSOCIATION TO ALLELE HLA-DRB3*01:01</scope>
    <scope>POLYMORPHISM</scope>
</reference>
<reference key="53">
    <citation type="journal article" date="2009" name="Blood">
        <title>Identification of 4 new HLA-DR-restricted minor histocompatibility antigens as hematopoietic targets in antitumor immunity.</title>
        <authorList>
            <person name="Stumpf A.N."/>
            <person name="van der Meijden E.D."/>
            <person name="van Bergen C.A."/>
            <person name="Willemze R."/>
            <person name="Falkenburg J.H."/>
            <person name="Griffioen M."/>
        </authorList>
    </citation>
    <scope>ASSOCIATION OF ALLELES DRB3*01:01 AND DRB3*02:02 WITH GRAFT-VERSUS-LEUKEMIA EFFECT</scope>
    <scope>POLYMORPHISM</scope>
</reference>
<reference key="54">
    <citation type="journal article" date="2009" name="Clin. Cancer Res.">
        <title>Vaccination with recombinant NY-ESO-1 protein elicits immunodominant HLA-DR52b-restricted CD4+ T cell responses with a conserved T cell receptor repertoire.</title>
        <authorList>
            <person name="Bioley G."/>
            <person name="Dousset C."/>
            <person name="Yeh A."/>
            <person name="Dupont B."/>
            <person name="Bhardwaj N."/>
            <person name="Mears G."/>
            <person name="Old L.J."/>
            <person name="Ayyoub M."/>
            <person name="Valmori D."/>
        </authorList>
    </citation>
    <scope>FUNCTION (ALLELE DRB3*02:02)</scope>
    <scope>SUBCELLULAR LOCATION</scope>
    <scope>TISSUE SPECIFICITY</scope>
</reference>
<reference key="55">
    <citation type="journal article" date="2009" name="J. Immunol.">
        <title>Evidence for the specificity for platelet HPA-1a alloepitope and the presenting HLA-DR52a of diverse antigen-specific helper T cell clones from alloimmunized mothers.</title>
        <authorList>
            <person name="Rayment R."/>
            <person name="Kooij T.W."/>
            <person name="Zhang W."/>
            <person name="Siebold C."/>
            <person name="Murphy M.F."/>
            <person name="Allen D."/>
            <person name="Willcox N."/>
            <person name="Roberts D.J."/>
        </authorList>
    </citation>
    <scope>ASSOCIATION OF ALLELE DRB3*01:01 WITH NEONATAL ALLOIMMUNE THROMBOCYTOPENIA</scope>
    <scope>POLYMORPHISM</scope>
</reference>
<reference key="56">
    <citation type="journal article" date="2010" name="Eur. J. Immunol.">
        <title>Reassessing the role of HLA-DRB3 T-cell responses: evidence for significant expression and complementary antigen presentation.</title>
        <authorList>
            <person name="Faner R."/>
            <person name="James E."/>
            <person name="Huston L."/>
            <person name="Pujol-Borrel R."/>
            <person name="Kwok W.W."/>
            <person name="Juan M."/>
        </authorList>
    </citation>
    <scope>FUNCTION (ALLELES DRB3*01:01 AND DRB3*02:02)</scope>
    <scope>TISSUE SPECIFICITY</scope>
    <scope>SUBCELLULAR LOCATION</scope>
</reference>
<reference key="57">
    <citation type="journal article" date="2010" name="Proc. Natl. Acad. Sci. U.S.A.">
        <title>Monitoring of NY-ESO-1 specific CD4+ T cells using molecularly defined MHC class II/His-tag-peptide tetramers.</title>
        <authorList>
            <person name="Ayyoub M."/>
            <person name="Dojcinovic D."/>
            <person name="Pignon P."/>
            <person name="Raimbaud I."/>
            <person name="Schmidt J."/>
            <person name="Luescher I."/>
            <person name="Valmori D."/>
        </authorList>
    </citation>
    <scope>FUNCTION (ALLELE DRB3*02:02)</scope>
</reference>
<reference key="58">
    <citation type="journal article" date="2013" name="J. Exp. Med.">
        <title>MHC II tetramers visualize human CD4+ T cell responses to Epstein-Barr virus infection and demonstrate atypical kinetics of the nuclear antigen EBNA1 response.</title>
        <authorList>
            <person name="Long H.M."/>
            <person name="Chagoury O.L."/>
            <person name="Leese A.M."/>
            <person name="Ryan G.B."/>
            <person name="James E."/>
            <person name="Morton L.T."/>
            <person name="Abbott R.J."/>
            <person name="Sabbah S."/>
            <person name="Kwok W."/>
            <person name="Rickinson A.B."/>
        </authorList>
    </citation>
    <scope>FUNCTION (ALLELE DRB3*02:02)</scope>
</reference>
<reference key="59">
    <citation type="journal article" date="2013" name="Leukemia">
        <title>Identification of a Wilms' tumor 1-derived immunogenic CD4(+) T-cell epitope that is recognized in the context of common Caucasian HLA-DR haplotypes.</title>
        <authorList>
            <person name="Anguille S."/>
            <person name="Fujiki F."/>
            <person name="Smits E.L."/>
            <person name="Oji Y."/>
            <person name="Lion E."/>
            <person name="Oka Y."/>
            <person name="Berneman Z.N."/>
            <person name="Sugiyama H."/>
        </authorList>
    </citation>
    <scope>FUNCTION (ALLELE DRB3*02:02)</scope>
</reference>
<reference key="60">
    <citation type="journal article" date="2018" name="JCI Insight">
        <title>Enhanced detection of neoantigen-reactive T cells targeting unique and shared oncogenes for personalized cancer immunotherapy.</title>
        <authorList>
            <person name="Yossef R."/>
            <person name="Tran E."/>
            <person name="Deniger D.C."/>
            <person name="Gros A."/>
            <person name="Pasetto A."/>
            <person name="Parkhurst M.R."/>
            <person name="Gartner J.J."/>
            <person name="Prickett T.D."/>
            <person name="Cafri G."/>
            <person name="Robbins P.F."/>
            <person name="Rosenberg S.A."/>
        </authorList>
    </citation>
    <scope>FUNCTION (ALLELE DRB3*02:02)</scope>
</reference>
<reference key="61">
    <citation type="journal article" date="2019" name="Eur. J. Immunol.">
        <title>Naturally processed HLA-DR3-restricted HHV-6B peptides are recognized broadly with polyfunctional and cytotoxic CD4 T-cell responses.</title>
        <authorList>
            <person name="Becerra-Artiles A."/>
            <person name="Cruz J."/>
            <person name="Leszyk J.D."/>
            <person name="Sidney J."/>
            <person name="Sette A."/>
            <person name="Shaffer S.A."/>
            <person name="Stern L.J."/>
        </authorList>
    </citation>
    <scope>FUNCTION (ALLELE DRB3*01:01 AND DRB3*02:02)</scope>
</reference>
<reference key="62">
    <citation type="journal article" date="2019" name="Front. Immunol.">
        <title>Characterization of Magnitude and Antigen Specificity of HLA-DP, DQ, and DRB3/4/5 Restricted DENV-Specific CD4+ T Cell Responses.</title>
        <authorList>
            <person name="Grifoni A."/>
            <person name="Moore E."/>
            <person name="Voic H."/>
            <person name="Sidney J."/>
            <person name="Phillips E."/>
            <person name="Jadi R."/>
            <person name="Mallal S."/>
            <person name="De Silva A.D."/>
            <person name="De Silva A.M."/>
            <person name="Peters B."/>
            <person name="Weiskopf D."/>
            <person name="Sette A."/>
        </authorList>
    </citation>
    <scope>FUNCTION (ALLELE DRB3*02:02)</scope>
</reference>
<reference key="63">
    <citation type="journal article" date="2019" name="J. Immunol.">
        <title>Primary EBV Infection Induces an Acute Wave of Activated Antigen-Specific Cytotoxic CD4+ T Cells.</title>
        <authorList>
            <person name="Meckiff B.J."/>
            <person name="Ladell K."/>
            <person name="McLaren J.E."/>
            <person name="Ryan G.B."/>
            <person name="Leese A.M."/>
            <person name="James E.A."/>
            <person name="Price D.A."/>
            <person name="Long H.M."/>
        </authorList>
    </citation>
    <scope>FUNCTION (ALLELE DRB3*02:02)</scope>
</reference>
<reference key="64">
    <citation type="journal article" date="2020" name="Nat. Biotechnol.">
        <title>Analyzing the Mycobacterium tuberculosis immune response by T-cell receptor clustering with GLIPH2 and genome-wide antigen screening.</title>
        <authorList>
            <person name="Huang H."/>
            <person name="Wang C."/>
            <person name="Rubelt F."/>
            <person name="Scriba T.J."/>
            <person name="Davis M.M."/>
        </authorList>
    </citation>
    <scope>FUNCTION (ALLELE DRB3*03:01)</scope>
</reference>
<reference key="65">
    <citation type="journal article" date="2007" name="J. Mol. Biol.">
        <title>Crystallographic structure of the human leukocyte antigen DRA, DRB3*0101: models of a directional alloimmune response and autoimmunity.</title>
        <authorList>
            <person name="Parry C.S."/>
            <person name="Gorski J."/>
            <person name="Stern L.J."/>
        </authorList>
    </citation>
    <scope>X-RAY CRYSTALLOGRAPHY (2.25 ANGSTROMS) OF 30-219 (ALLELE DRB3*01:01) IN COMPLEX WITH HLA-DRA AND ITGB3 PEPTIDE (ALLOANTIGEN HPA-1A)</scope>
    <scope>SUBUNIT</scope>
    <scope>DOMAIN</scope>
    <scope>DISULFIDE BOND</scope>
</reference>
<reference key="66">
    <citation type="journal article" date="2008" name="Proc. Natl. Acad. Sci. U.S.A.">
        <title>The structure of HLA-DR52c: comparison to other HLA-DRB3 alleles.</title>
        <authorList>
            <person name="Dai S."/>
            <person name="Crawford F."/>
            <person name="Marrack P."/>
            <person name="Kappler J.W."/>
        </authorList>
    </citation>
    <scope>X-RAY CRYSTALLOGRAPHY (1.8 ANGSTROMS) OF 30-219 (ALLELE DRB3*03:01) IN COMPLEX WITH OF HLA-DRA AND EEF1A2 PEPTIDE</scope>
    <scope>SUBUNIT</scope>
    <scope>DOMAIN</scope>
    <scope>GLYCOSYLATION AT ASN-48</scope>
    <scope>DISULFIDE BOND</scope>
</reference>
<reference key="67">
    <citation type="journal article" date="2013" name="Tissue Antigens">
        <title>Common and well-documented HLA alleles: 2012 update to the CWD catalogue.</title>
        <authorList>
            <person name="Mack S.J."/>
            <person name="Cano P."/>
            <person name="Hollenbach J.A."/>
            <person name="He J."/>
            <person name="Hurley C.K."/>
            <person name="Middleton D."/>
            <person name="Moraes M.E."/>
            <person name="Pereira S.E."/>
            <person name="Kempenich J.H."/>
            <person name="Reed E.F."/>
            <person name="Setterholm M."/>
            <person name="Smith A.G."/>
            <person name="Tilanus M.G."/>
            <person name="Torres M."/>
            <person name="Varney M.D."/>
            <person name="Voorter C.E."/>
            <person name="Fischer G.F."/>
            <person name="Fleischhauer K."/>
            <person name="Goodridge D."/>
            <person name="Klitz W."/>
            <person name="Little A.M."/>
            <person name="Maiers M."/>
            <person name="Marsh S.G."/>
            <person name="Mueller C.R."/>
            <person name="Noreen H."/>
            <person name="Rozemuller E.H."/>
            <person name="Sanchez-Mazas A."/>
            <person name="Senitzer D."/>
            <person name="Trachtenberg E."/>
            <person name="Fernandez-Vina M."/>
        </authorList>
    </citation>
    <scope>POLYMORPHISM</scope>
</reference>
<evidence type="ECO:0000250" key="1">
    <source>
        <dbReference type="UniProtKB" id="P01911"/>
    </source>
</evidence>
<evidence type="ECO:0000255" key="2"/>
<evidence type="ECO:0000269" key="3">
    <source>
    </source>
</evidence>
<evidence type="ECO:0000269" key="4">
    <source>
    </source>
</evidence>
<evidence type="ECO:0000269" key="5">
    <source>
    </source>
</evidence>
<evidence type="ECO:0000269" key="6">
    <source>
    </source>
</evidence>
<evidence type="ECO:0000269" key="7">
    <source>
    </source>
</evidence>
<evidence type="ECO:0000269" key="8">
    <source>
    </source>
</evidence>
<evidence type="ECO:0000269" key="9">
    <source>
    </source>
</evidence>
<evidence type="ECO:0000269" key="10">
    <source>
    </source>
</evidence>
<evidence type="ECO:0000269" key="11">
    <source>
    </source>
</evidence>
<evidence type="ECO:0000269" key="12">
    <source>
    </source>
</evidence>
<evidence type="ECO:0000269" key="13">
    <source>
    </source>
</evidence>
<evidence type="ECO:0000269" key="14">
    <source>
    </source>
</evidence>
<evidence type="ECO:0000269" key="15">
    <source>
    </source>
</evidence>
<evidence type="ECO:0000269" key="16">
    <source>
    </source>
</evidence>
<evidence type="ECO:0000269" key="17">
    <source>
    </source>
</evidence>
<evidence type="ECO:0000269" key="18">
    <source>
    </source>
</evidence>
<evidence type="ECO:0000269" key="19">
    <source>
    </source>
</evidence>
<evidence type="ECO:0000269" key="20">
    <source>
    </source>
</evidence>
<evidence type="ECO:0000269" key="21">
    <source>
    </source>
</evidence>
<evidence type="ECO:0000269" key="22">
    <source>
    </source>
</evidence>
<evidence type="ECO:0000269" key="23">
    <source>
    </source>
</evidence>
<evidence type="ECO:0000305" key="24"/>
<evidence type="ECO:0000305" key="25">
    <source>
    </source>
</evidence>
<evidence type="ECO:0007744" key="26">
    <source>
        <dbReference type="PDB" id="2Q6W"/>
    </source>
</evidence>
<evidence type="ECO:0007744" key="27">
    <source>
        <dbReference type="PDB" id="3C5J"/>
    </source>
</evidence>
<evidence type="ECO:0007829" key="28">
    <source>
        <dbReference type="PDB" id="2Q6W"/>
    </source>
</evidence>
<evidence type="ECO:0007829" key="29">
    <source>
        <dbReference type="PDB" id="4H1L"/>
    </source>
</evidence>
<feature type="signal peptide" evidence="2">
    <location>
        <begin position="1"/>
        <end position="29"/>
    </location>
</feature>
<feature type="chain" id="PRO_0000018956" description="HLA class II histocompatibility antigen, DR beta 3 chain" evidence="2">
    <location>
        <begin position="30"/>
        <end position="266"/>
    </location>
</feature>
<feature type="topological domain" description="Extracellular" evidence="2">
    <location>
        <begin position="30"/>
        <end position="227"/>
    </location>
</feature>
<feature type="transmembrane region" description="Helical" evidence="2">
    <location>
        <begin position="228"/>
        <end position="248"/>
    </location>
</feature>
<feature type="topological domain" description="Cytoplasmic" evidence="2">
    <location>
        <begin position="249"/>
        <end position="266"/>
    </location>
</feature>
<feature type="domain" description="Ig-like C1-type">
    <location>
        <begin position="126"/>
        <end position="214"/>
    </location>
</feature>
<feature type="region of interest" description="Beta-1">
    <location>
        <begin position="30"/>
        <end position="124"/>
    </location>
</feature>
<feature type="region of interest" description="Beta-2">
    <location>
        <begin position="125"/>
        <end position="227"/>
    </location>
</feature>
<feature type="site" description="Self-peptide antigen" evidence="5 26">
    <location>
        <position position="40"/>
    </location>
</feature>
<feature type="site" description="Self-peptide antigen" evidence="5 26">
    <location>
        <position position="90"/>
    </location>
</feature>
<feature type="site" description="Self-peptide antigen" evidence="5 26">
    <location>
        <position position="100"/>
    </location>
</feature>
<feature type="site" description="Self-peptide antigen" evidence="5 26">
    <location>
        <position position="110"/>
    </location>
</feature>
<feature type="site" description="Self-peptide antigen" evidence="5 26">
    <location>
        <position position="111"/>
    </location>
</feature>
<feature type="glycosylation site" description="N-linked (GlcNAc...) asparagine" evidence="7 27">
    <location>
        <position position="48"/>
    </location>
</feature>
<feature type="disulfide bond" evidence="5 7 26 27">
    <location>
        <begin position="44"/>
        <end position="108"/>
    </location>
</feature>
<feature type="disulfide bond" evidence="5 7 26 27">
    <location>
        <begin position="146"/>
        <end position="202"/>
    </location>
</feature>
<feature type="sequence variant" id="VAR_060739" description="In allele DRB3*01:04.">
    <original>L</original>
    <variation>S</variation>
    <location>
        <position position="37"/>
    </location>
</feature>
<feature type="sequence variant" id="VAR_060740" description="In allele DRB3*02:12; dbSNP:rs1071747.">
    <original>E</original>
    <variation>Q</variation>
    <location>
        <position position="38"/>
    </location>
</feature>
<feature type="sequence variant" id="VAR_060741" description="In allele DRB3*01:14; requires 2 nucleotide substitutions.">
    <original>L</original>
    <variation>Y</variation>
    <location>
        <position position="39"/>
    </location>
</feature>
<feature type="sequence variant" id="VAR_016686" description="In allele DRB3*01:02.">
    <original>R</original>
    <variation>C</variation>
    <location>
        <position position="40"/>
    </location>
</feature>
<feature type="sequence variant" id="VAR_060742" description="In allele DRB3*02:01, allele DRB3*02:02, allele DRB3*02:03, allele DRB3*02:04, allele DRB3*02:05, allele DRB3*02:06, allele DRB3*02:07, allele DRB3*02:08, allele DRB3*02:09, allele DRB3*02:10, allele DRB3*02:11, allele DRB3*02:12, allele DRB3*02:13, allele DRB3*02:14, allele DRB3*02:15, allele DRB3*02:16, allele DRB3*02:17, allele DRB3*02:18, allele DRB3*02:19, allele DRB3*02:20, allele DRB3*02:21, allele DRB3*02:22, allele DRB3*02:23, allele DRB3*02:24, allele DRB3*02:25, allele DRB3*03:01, allele DRB3*03:02 and allele DRB3*03:03; dbSNP:rs1071748.">
    <original>R</original>
    <variation>L</variation>
    <location>
        <position position="40"/>
    </location>
</feature>
<feature type="sequence variant" id="VAR_060743" description="In allele DRB3*01:14; dbSNP:rs1136752.">
    <original>R</original>
    <variation>S</variation>
    <location>
        <position position="40"/>
    </location>
</feature>
<feature type="sequence variant" id="VAR_060744" description="In allele DRB3*01:14; dbSNP:rs200581589.">
    <original>K</original>
    <variation>T</variation>
    <location>
        <position position="41"/>
    </location>
</feature>
<feature type="sequence variant" id="VAR_060746" description="In allele DRB3*01:09, allele DRB3*02:01, allele DRB3*02:02, allele DRB3*02:03, allele DRB3*02:04, allele DRB3*02:05, allele DRB3*02:06, allele DRB3*02:07, allele DRB3*02:08, allele DRB3*02:09, allele DRB3*02:10, allele DRB3*02:11, allele DRB3*02:12, allele DRB3*02:14, allele DRB3*02:15, allele DRB3*02:16, allele DRB3*02:17, allele DRB3*02:18, allele DRB3*02:19, allele DRB3*02:20, allele DRB3*02:21, allele DRB3*02:22, allele DRB3*02:23, allele DRB3*02:24, allele DRB3*02:25, allele DRB3*03:01, allele DRB3*03:02 and allele DRB3*03:03; dbSNP:rs147440497.">
    <original>Y</original>
    <variation>F</variation>
    <location>
        <position position="55"/>
    </location>
</feature>
<feature type="sequence variant" id="VAR_060745" description="In allele DRB3*02:13; requires 2 nucleotide substitutions.">
    <original>Y</original>
    <variation>L</variation>
    <location>
        <position position="55"/>
    </location>
</feature>
<feature type="sequence variant" id="VAR_060747" description="In allele DRB3*01:03, allele DRB3*01:09, allele DRB3*02:01, allele DRB3*02:02, allele DRB3*02:03, allele DRB3*02:04, allele DRB3*02:05, allele DRB3*02:06, allele DRB3*02:07, allele DRB3*02:08, allele DRB3*02:09, allele DRB3*02:10, allele DRB3*02:11, allele DRB3*02:12, allele DRB3*02:13, allele DRB3*02:14, allele DRB3*02:15, allele DRB3*02:16, allele DRB3*02:17, allele DRB3*02:18, allele DRB3*02:19, allele DRB3*02:20, allele DRB3*02:21, allele DRB3*02:22, allele DRB3*02:23, allele DRB3*02:24, allele DRB3*02:25, allele DRB3*03:01, allele DRB3*03:02 and allele DRB3*03:03; dbSNP:rs202185589.">
    <original>D</original>
    <variation>E</variation>
    <location>
        <position position="57"/>
    </location>
</feature>
<feature type="sequence variant" id="VAR_060748" description="In allele DRB3*01:05; dbSNP:rs142793258.">
    <original>D</original>
    <variation>N</variation>
    <location>
        <position position="57"/>
    </location>
</feature>
<feature type="sequence variant" id="VAR_060749" description="In allele DRB3*01:11; dbSNP:rs1407020168.">
    <original>R</original>
    <variation>I</variation>
    <location>
        <position position="58"/>
    </location>
</feature>
<feature type="sequence variant" id="VAR_060750" description="In allele DRB3*01:09, allele DRB3*02:01, allele DRB3*02:02, allele DRB3*02:03, allele DRB3*02:04, allele DRB3*02:06, allele DRB3*02:07, allele DRB3*02:08, allele DRB3*02:09, allele DRB3*02:10, allele DRB3*02:11, allele DRB3*02:12, allele DRB3*02:13, allele DRB3*02:14, allele DRB3*02:15, allele DRB3*02:16, allele DRB3*02:17, allele DRB3*02:18, allele DRB3*02:19, allele DRB3*02:20, allele DRB3*02:21, allele DRB3*02:22, allele DRB3*02:23, allele DRB3*02:24, allele DRB3*02:25 and allele DRB3*03:02; dbSNP:rs138849995.">
    <original>Y</original>
    <variation>H</variation>
    <location>
        <position position="59"/>
    </location>
</feature>
<feature type="sequence variant" id="VAR_060752" description="In allele DRB3*01:13; dbSNP:rs707956.">
    <original>F</original>
    <variation>L</variation>
    <location>
        <position position="66"/>
    </location>
</feature>
<feature type="sequence variant" id="VAR_060753" description="In allele DRB3*01:08, allele DRB3*02:06 and allele DRB3*02:20; requires 2 nucleotide substitutions.">
    <original>F</original>
    <variation>N</variation>
    <location>
        <position position="66"/>
    </location>
</feature>
<feature type="sequence variant" id="VAR_060751" description="In allele DRB3*02:03; dbSNP:rs200042906.">
    <original>F</original>
    <variation>S</variation>
    <location>
        <position position="66"/>
    </location>
</feature>
<feature type="sequence variant" id="VAR_060754" description="In allele DRB3*01:07, allele DRB3*01:09, allele DRB3*02:01, allele DRB3*02:02, allele DRB3*02:04, allele DRB3*02:05, allele DRB3*02:07, allele DRB3*02:08, allele DRB3*02:09, allele DRB3*02:10, allele DRB3*02:11, allele DRB3*02:12, allele DRB3*02:13, allele DRB3*02:14, allele DRB3*02:15, allele DRB3*02:16, allele DRB3*02:17, allele DRB3*02:18, allele DRB3*02:19, allele DRB3*02:21, allele DRB3*02:22, allele DRB3*02:23, allele DRB3*02:24 and allele DRB3*02:25; dbSNP:rs200042906.">
    <original>F</original>
    <variation>Y</variation>
    <location>
        <position position="66"/>
    </location>
</feature>
<feature type="sequence variant" id="VAR_060755" description="In allele DRB3*01:07, allele DRB3*01:09, allele DRB3*02:01, allele DRB3*02:02, allele DRB3*02:04, allele DRB3*02:05, allele DRB3*02:06, allele DRB3*02:07, allele DRB3*02:08, allele DRB3*02:09, allele DRB3*02:10, allele DRB3*02:11, allele DRB3*02:12, allele DRB3*02:13, allele DRB3*02:14, allele DRB3*02:15, allele DRB3*02:16, allele DRB3*02:17, allele DRB3*02:18, allele DRB3*02:19, allele DRB3*02:21, allele DRB3*02:22, allele DRB3*02:23, allele DRB3*02:24 and allele DRB3*02:25; requires 2 nucleotide substitutions.">
    <original>L</original>
    <variation>A</variation>
    <location>
        <position position="67"/>
    </location>
</feature>
<feature type="sequence variant" id="VAR_060756" description="In allele DRB3*01:06, allele DRB3*01:08, allele DRB3*02:03, allele DRB3*02:20, allele DRB3*03:01, allele DRB3*03:02 and allele DRB3*03:03; dbSNP:rs1059580.">
    <original>L</original>
    <variation>V</variation>
    <location>
        <position position="67"/>
    </location>
</feature>
<feature type="sequence variant" id="VAR_060757" description="In allele DRB3*01:10; dbSNP:rs774894415.">
    <original>R</original>
    <variation>S</variation>
    <location>
        <position position="68"/>
    </location>
</feature>
<feature type="sequence variant" id="VAR_060758" description="In allele DRB3*01:07, allele DRB3*02:01, allele DRB3*02:02, allele DRB3*02:03, allele DRB3*02:04, allele DRB3*02:05, allele DRB3*02:06, allele DRB3*02:07, allele DRB3*02:08, allele DRB3*02:11, allele DRB3*02:12, allele DRB3*02:13, allele DRB3*02:14, allele DRB3*02:15, allele DRB3*02:16, allele DRB3*02:17, allele DRB3*02:18, allele DRB3*02:19, allele DRB3*02:20, allele DRB3*02:21, allele DRB3*02:22, allele DRB3*02:23, allele DRB3*02:24 and allele DRB3*02:25; dbSNP:rs79606458.">
    <original>T</original>
    <variation>R</variation>
    <location>
        <position position="80"/>
    </location>
</feature>
<feature type="sequence variant" id="VAR_060759" description="In allele DRB3*02:23.">
    <original>R</original>
    <variation>L</variation>
    <location>
        <position position="84"/>
    </location>
</feature>
<feature type="sequence variant" id="VAR_060760" description="In allele DRB3*02:16; dbSNP:rs144532965.">
    <original>V</original>
    <variation>A</variation>
    <location>
        <position position="86"/>
    </location>
</feature>
<feature type="sequence variant" id="VAR_060762" description="In allele DRB3*01:07, allele DRB3*02:01, allele DRB3*02:02, allele DRB3*02:03, allele DRB3*02:04, allele DRB3*02:05, allele DRB3*02:06, allele DRB3*02:10, allele DRB3*02:11, allele DRB3*02:12, allele DRB3*02:13, allele DRB3*02:14, allele DRB3*02:15, allele DRB3*02:17, allele DRB3*02:18, allele DRB3*02:19, allele DRB3*02:20, allele DRB3*02:22, allele DRB3*02:23, allele DRB3*02:24 and allele DRB3*02:25; dbSNP:rs144532965.">
    <original>V</original>
    <variation>D</variation>
    <location>
        <position position="86"/>
    </location>
</feature>
<feature type="sequence variant" id="VAR_060761" description="In allele DRB3*02:08; requires 2 nucleotide substitutions.">
    <original>V</original>
    <variation>S</variation>
    <location>
        <position position="86"/>
    </location>
</feature>
<feature type="sequence variant" id="VAR_060763" description="In allele DRB3*02:18.">
    <original>A</original>
    <variation>E</variation>
    <location>
        <position position="87"/>
    </location>
</feature>
<feature type="sequence variant" id="VAR_060764" description="In allele DRB3*02:16; requires 2 nucleotide substitutions.">
    <original>S</original>
    <variation>H</variation>
    <location>
        <position position="89"/>
    </location>
</feature>
<feature type="sequence variant" id="VAR_060765" description="In allele DRB3*01:07, allele DRB3*02:01, allele DRB3*02:02, allele DRB3*02:03, allele DRB3*02:04, allele DRB3*02:05, allele DRB3*02:06, allele DRB3*02:07, allele DRB3*02:08, allele DRB3*02:10, allele DRB3*02:11, allele DRB3*02:12, allele DRB3*02:13, allele DRB3*02:14, allele DRB3*02:15, allele DRB3*02:17, allele DRB3*02:18, allele DRB3*02:20, allele DRB3*02:22, allele DRB3*02:23 and allele DRB3*02:24; dbSNP:rs41541218.">
    <original>S</original>
    <variation>Y</variation>
    <location>
        <position position="89"/>
    </location>
</feature>
<feature type="sequence variant" id="VAR_060766" description="In allele DRB3*02:17; dbSNP:rs696318.">
    <original>L</original>
    <variation>F</variation>
    <location>
        <position position="96"/>
    </location>
</feature>
<feature type="sequence variant" id="VAR_060767" description="In allele DRB3*02:11; dbSNP:rs696318.">
    <original>L</original>
    <variation>I</variation>
    <location>
        <position position="96"/>
    </location>
</feature>
<feature type="sequence variant" id="VAR_033396" description="In dbSNP:rs138927633.">
    <original>G</original>
    <variation>A</variation>
    <location>
        <position position="102"/>
    </location>
</feature>
<feature type="sequence variant" id="VAR_060768" description="In allele DRB3*01:07, allele DRB3*02:01, allele DRB3*02:02, allele DRB3*02:03, allele DRB3*02:05, allele DRB3*02:06, allele DRB3*02:07, allele DRB3*02:08, allele DRB3*02:09, allele DRB3*02:10, allele DRB3*02:11, allele DRB3*02:12, allele DRB3*02:13, allele DRB3*02:14, allele DRB3*02:15, allele DRB3*02:16, allele DRB3*02:17, allele DRB3*02:18, allele DRB3*02:20, allele DRB3*02:21, allele DRB3*02:23, allele DRB3*02:24, allele DRB3*02:25, allele DRB3*03:01 and allele DRB3*03:02; dbSNP:rs1059598.">
    <original>R</original>
    <variation>Q</variation>
    <location>
        <position position="103"/>
    </location>
</feature>
<feature type="sequence variant" id="VAR_060769" description="In allele DRB3*02:15; dbSNP:rs115817940.">
    <original>N</original>
    <variation>T</variation>
    <location>
        <position position="106"/>
    </location>
</feature>
<feature type="sequence variant" id="VAR_060770" description="In allele DRB3*01:12.">
    <original>G</original>
    <variation>R</variation>
    <location>
        <position position="113"/>
    </location>
</feature>
<feature type="sequence variant" id="VAR_033397" description="In dbSNP:rs1136778.">
    <original>V</original>
    <variation>A</variation>
    <location>
        <position position="114"/>
    </location>
</feature>
<feature type="sequence variant" id="VAR_060771" description="In allele DRB3*02:14.">
    <original>G</original>
    <variation>A</variation>
    <location>
        <position position="115"/>
    </location>
</feature>
<feature type="sequence variant" id="VAR_060772" description="In allele DRB3*02:01, allele DRB3*02:04, allele DRB3*02:24, allele DRB3*03:01 and allele DRB3*03:02; dbSNP:rs41556512.">
    <original>G</original>
    <variation>V</variation>
    <location>
        <position position="115"/>
    </location>
</feature>
<feature type="sequence variant" id="VAR_060773" description="In allele DRB3*03:01; dbSNP:rs75709987.">
    <original>A</original>
    <variation>T</variation>
    <location>
        <position position="169"/>
    </location>
</feature>
<feature type="sequence variant" id="VAR_060774" description="In allele DRB3*03:01; dbSNP:rs139485758.">
    <original>Q</original>
    <variation>H</variation>
    <location>
        <position position="178"/>
    </location>
</feature>
<feature type="sequence variant" id="VAR_060775" description="In allele DRB3*02:01.">
    <original>V</original>
    <variation>F</variation>
    <location>
        <position position="193"/>
    </location>
</feature>
<feature type="sequence variant" id="VAR_060776" description="In allele DRB3*02:01, allele DRB3*02:02, allele DRB3*02:10, allele DRB3*02:11, allele DRB3*02:24 and allele DRB3*03:01; dbSNP:rs142204283.">
    <original>A</original>
    <variation>P</variation>
    <location>
        <position position="212"/>
    </location>
</feature>
<feature type="sequence variant" id="VAR_060777" description="In allele DRB3*02:01, allele DRB3*02:02, allele DRB3*02:10 and allele DRB3*02:11; dbSNP:rs147669022.">
    <original>R</original>
    <variation>S</variation>
    <location>
        <position position="218"/>
    </location>
</feature>
<feature type="strand" evidence="28">
    <location>
        <begin position="36"/>
        <end position="47"/>
    </location>
</feature>
<feature type="turn" evidence="29">
    <location>
        <begin position="48"/>
        <end position="51"/>
    </location>
</feature>
<feature type="strand" evidence="28">
    <location>
        <begin position="52"/>
        <end position="61"/>
    </location>
</feature>
<feature type="strand" evidence="28">
    <location>
        <begin position="64"/>
        <end position="70"/>
    </location>
</feature>
<feature type="turn" evidence="28">
    <location>
        <begin position="71"/>
        <end position="73"/>
    </location>
</feature>
<feature type="strand" evidence="28">
    <location>
        <begin position="75"/>
        <end position="80"/>
    </location>
</feature>
<feature type="helix" evidence="28">
    <location>
        <begin position="81"/>
        <end position="83"/>
    </location>
</feature>
<feature type="helix" evidence="28">
    <location>
        <begin position="84"/>
        <end position="91"/>
    </location>
</feature>
<feature type="turn" evidence="28">
    <location>
        <begin position="94"/>
        <end position="96"/>
    </location>
</feature>
<feature type="helix" evidence="28">
    <location>
        <begin position="100"/>
        <end position="102"/>
    </location>
</feature>
<feature type="helix" evidence="28">
    <location>
        <begin position="103"/>
        <end position="106"/>
    </location>
</feature>
<feature type="helix" evidence="28">
    <location>
        <begin position="108"/>
        <end position="115"/>
    </location>
</feature>
<feature type="turn" evidence="28">
    <location>
        <begin position="116"/>
        <end position="121"/>
    </location>
</feature>
<feature type="strand" evidence="28">
    <location>
        <begin position="127"/>
        <end position="134"/>
    </location>
</feature>
<feature type="strand" evidence="28">
    <location>
        <begin position="142"/>
        <end position="154"/>
    </location>
</feature>
<feature type="strand" evidence="28">
    <location>
        <begin position="157"/>
        <end position="162"/>
    </location>
</feature>
<feature type="strand" evidence="28">
    <location>
        <begin position="165"/>
        <end position="167"/>
    </location>
</feature>
<feature type="strand" evidence="28">
    <location>
        <begin position="171"/>
        <end position="173"/>
    </location>
</feature>
<feature type="strand" evidence="28">
    <location>
        <begin position="180"/>
        <end position="182"/>
    </location>
</feature>
<feature type="strand" evidence="28">
    <location>
        <begin position="184"/>
        <end position="192"/>
    </location>
</feature>
<feature type="strand" evidence="28">
    <location>
        <begin position="200"/>
        <end position="205"/>
    </location>
</feature>
<feature type="strand" evidence="28">
    <location>
        <begin position="213"/>
        <end position="217"/>
    </location>
</feature>
<proteinExistence type="evidence at protein level"/>
<protein>
    <recommendedName>
        <fullName>HLA class II histocompatibility antigen, DR beta 3 chain</fullName>
    </recommendedName>
    <alternativeName>
        <fullName>MHC class II antigen DRB3</fullName>
    </alternativeName>
</protein>
<keyword id="KW-0002">3D-structure</keyword>
<keyword id="KW-1064">Adaptive immunity</keyword>
<keyword id="KW-1003">Cell membrane</keyword>
<keyword id="KW-0968">Cytoplasmic vesicle</keyword>
<keyword id="KW-1015">Disulfide bond</keyword>
<keyword id="KW-0256">Endoplasmic reticulum</keyword>
<keyword id="KW-0967">Endosome</keyword>
<keyword id="KW-0325">Glycoprotein</keyword>
<keyword id="KW-0391">Immunity</keyword>
<keyword id="KW-0458">Lysosome</keyword>
<keyword id="KW-0472">Membrane</keyword>
<keyword id="KW-0491">MHC II</keyword>
<keyword id="KW-1267">Proteomics identification</keyword>
<keyword id="KW-1185">Reference proteome</keyword>
<keyword id="KW-0732">Signal</keyword>
<keyword id="KW-0812">Transmembrane</keyword>
<keyword id="KW-1133">Transmembrane helix</keyword>
<keyword id="KW-0832">Ubl conjugation</keyword>
<comment type="function">
    <text evidence="1 4 9 12 13 14 16 17 18 19 20 21 22">A beta chain of antigen-presenting major histocompatibility complex class II (MHCII) molecule. In complex with the alpha chain HLA-DRA, displays antigenic peptides on professional antigen presenting cells (APCs) for recognition by alpha-beta T cell receptor (TCR) on HLA-DRB3-restricted CD4-positive T cells. This guides antigen-specific T-helper effector functions, both antibody-mediated immune response and macrophage activation, to ultimately eliminate the infectious agents and transformed cells. Typically presents extracellular peptide antigens of 10 to 30 amino acids that arise from proteolysis of endocytosed antigens in lysosomes (PubMed:16148104, PubMed:19531622, PubMed:19830726, PubMed:20368442, PubMed:22929521, PubMed:23569328, PubMed:2463305, PubMed:2788702, PubMed:30282837, PubMed:31020640, PubMed:31308093, PubMed:31333679). In the tumor microenvironment, presents antigenic peptides that are primarily generated in tumor-resident APCs likely via phagocytosis of apoptotic tumor cells or macropinocytosis of secreted tumor proteins (By similarity). Presents peptides derived from intracellular proteins that are trapped in autolysosomes after macroautophagy, a mechanism especially relevant for T cell selection in the thymus and central immune tolerance (By similarity). The selection of the immunodominant epitopes follows two processing modes: 'bind first, cut/trim later' for pathogen-derived antigenic peptides and 'cut first, bind later' for autoantigens/self-peptides. The anchor residue at position 1 of the peptide N-terminus, usually a large hydrophobic residue, is essential for high affinity interaction with MHCII molecules (By similarity).</text>
</comment>
<comment type="function">
    <text evidence="12 17 18 20">ALLELE DRB3*01:01: Exclusively presents several immunogenic epitopes derived from C.tetani neurotoxin tetX, playing a significant role in immune recognition and long-term protection (PubMed:19830726, PubMed:2463305, PubMed:2788702). Presents viral epitopes derived from HHV-6B U11, TRX2/U56 and U85 antigens to polyfunctional CD4-positive T cells with cytotoxic activity implicated in control of HHV-6B infection (PubMed:31020640).</text>
</comment>
<comment type="function">
    <text evidence="9 12 13 14 16 18 19 20 21 22">ALLELE DRB3*02:02 Exclusively presents several immunogenic epitopes derived from C.tetani neurotoxin tetX, playing a significant role in immune recognition and long-term protection (PubMed:19830726, PubMed:2788702). Upon EBV infection, presents to CD4-positive T cells latent antigen EBNA2 (PRSPTVFYNIPPMPLPPSQL) and lytic antigen BZLF1 (LTAYHVSTAPTGSWF) peptides, driving oligoclonal expansion and selection of virus-specific memory T cell subsets with cytotoxic potential to directly eliminate virus-infected B cells (PubMed:23569328, PubMed:31308093). Presents viral epitopes derived from HHV-6B U11, gB/U39 and gH/U48 antigens to polyfunctional CD4-positive T cells with cytotoxic activity implicated in control of HHV-6B infection (PubMed:31020640). Plays a minor role in CD4-positive T cell immune response against Dengue virus by presenting conserved peptides from capsid and non-structural NS3 proteins (PubMed:31333679). Displays peptides derived from IAV matrix protein M, implying a role in protection against IAV infection (PubMed:19830726). In the context of tumor immunesurveillance, may present to T-helper 1 cells an immunogenic epitope derived from tumor-associated antigen WT1 (KRYFKLSHLQMHSRKH), likely providing for effective antitumor immunity in a wide range of solid and hematological malignancies (PubMed:22929521). Presents to Vbeta2-positive T-helper 1 cells specifically an immunodominant peptide derived from tumor antigen CTAG1A/NY-ESO-1(PGVLLKEFTVSGNILTIRLTAADHR) and confers protective memory response (PubMed:19531622, PubMed:20368442). In metastatic epithelial tumors, presents to intratumoral CD4-positive T cells a TP53 neoantigen (HYNYMCNSSCMGSMNRRPILTIITL) carrying G245S hotspot driver mutation and may mediate tumor regression (PubMed:30282837).</text>
</comment>
<comment type="function">
    <text evidence="4 18 23">ALLELE DRB3*03:01: Presents a series of conserved peptides derived from the M.tuberculosis PPE family of proteins, in particular PPE29 and PPE33, known to be highly immunogenic (PubMed:32341563). Presents immunogenic epitopes derived from C.tetani neurotoxin tetX, playing a role in immune recognition and long-term protection (PubMed:2788702). Displays immunodominant viral peptides from HCV non-structural protein NS2, as part of a broad range T-helper response to resolve infection (PubMed:16148104).</text>
</comment>
<comment type="subunit">
    <text evidence="1 5 7">Heterotrimer that consists of an alpha chain HLA-DRA, a beta chain HLA-DRB1 and a peptide (peptide-MHCII) (PubMed:17583734, PubMed:18697946). Newly synthesized alpha and beta chains forms a heterodimer (MHCII) that associates with the CD74/invariant chain (Ii) in the endoplasmic reticulum (ER). Ii is a trimer composed of three subunits and each subunit interacts with one MHCII dimer, blocking the peptide-binding cleft. As a result, MHCII molecules cannot bind peptides present in the ER (By similarity). The complex of MHCII and CD74/Ii is transported in vesicles from ER to Golgi to lysosomes, where it encounters antigenic peptides generated via proteolysis of endocytosed antigens. MHCII dimers are dissociated from CD74/Ii by the combined action of proteolysis and HLA-DM (By similarity). Lysosomal enzymes such as cathepsin, degrade CD74/Ii leaving a 24 amino acid remnant called class II-associated Ii or CLIP. Interacts (via the peptide binding cleft) with CLIP; this interaction inhibits antigen peptide binding before entry in the endosomal compartment. The displacement of CLIP and replacement by a high affinity peptide in lysosomes is performed by HLA-DM heterodimer. HLA-DM catalyzes CLIP dissociation from MHCII, stabilizes empty MHCII and mediates the selection of high affinity peptides (By similarity). Interacts with HLA-DM heterodimer; this interaction is direct (By similarity). Interacts with TCR (via CDR3) (By similarity). Interacts (via beta-2 domain) with CD4 coreceptor (via Ig-like V-type domain); this interaction is of exceptionally low affinity yet necessary for optimal recognition of antigenic peptides (By similarity).</text>
</comment>
<comment type="interaction">
    <interactant intactId="EBI-3910269">
        <id>P79483</id>
    </interactant>
    <interactant intactId="EBI-1049597">
        <id>P27797</id>
        <label>CALR</label>
    </interactant>
    <organismsDiffer>false</organismsDiffer>
    <experiments>3</experiments>
</comment>
<comment type="interaction">
    <interactant intactId="EBI-3910269">
        <id>P79483</id>
    </interactant>
    <interactant intactId="EBI-351007">
        <id>P36957</id>
        <label>DLST</label>
    </interactant>
    <organismsDiffer>false</organismsDiffer>
    <experiments>3</experiments>
</comment>
<comment type="interaction">
    <interactant intactId="EBI-3910269">
        <id>P79483</id>
    </interactant>
    <interactant intactId="EBI-1055945">
        <id>Q8TDX7</id>
        <label>NEK7</label>
    </interactant>
    <organismsDiffer>false</organismsDiffer>
    <experiments>3</experiments>
</comment>
<comment type="subcellular location">
    <subcellularLocation>
        <location evidence="6 9 12">Cell membrane</location>
        <topology evidence="2">Single-pass type I membrane protein</topology>
    </subcellularLocation>
    <subcellularLocation>
        <location evidence="6">Endoplasmic reticulum membrane</location>
        <topology evidence="2">Single-pass type I membrane protein</topology>
    </subcellularLocation>
    <subcellularLocation>
        <location evidence="6">Lysosome membrane</location>
        <topology evidence="2">Single-pass type I membrane protein</topology>
    </subcellularLocation>
    <subcellularLocation>
        <location evidence="6">Late endosome membrane</location>
        <topology evidence="2">Single-pass type I membrane protein</topology>
    </subcellularLocation>
    <subcellularLocation>
        <location evidence="1">Autolysosome membrane</location>
        <topology evidence="2">Single-pass type I membrane protein</topology>
    </subcellularLocation>
    <text evidence="1">The MHC class II complex transits through a number of intracellular compartments in the endocytic pathway until it reaches the cell membrane for antigen presentation (PubMed:18305173). Component of immunological synapses at the interface between T cell and APC.</text>
</comment>
<comment type="tissue specificity">
    <text evidence="9 12">Expressed in professional APCs: monocyte/macrophages, dendritic cells and B cells (at protein level).</text>
</comment>
<comment type="domain">
    <text evidence="1 5 7">The beta-1 domain is a structural part of the peptide-binding cleft. It contains one alpha helix and 4 beta sheets, respectively forming part of the wall and the floor of the peptide-binding cleft. The other 4 beta sheets of the floor and the second alpha helix wall is formed by the alpha-1 domain of HLA-DRA. Forms hydrogen bonds with the peptide main chain via conserved amino acid in most HLA-DRB molecules. The polymorphic residues accomodate the side chains of the peptide conferring peptide specificity to distinct HLA-DRB3 alleles (PubMed:17583734, PubMed:18697946). The peptide-bound beta-1 domain forms hydrogen bonds with CDR2 and CDR3 alpha-domains of TCR (By similarity).</text>
</comment>
<comment type="domain">
    <text evidence="1">The beta-2 Ig-like domain mediates the interaction with CD4 coreceptor.</text>
</comment>
<comment type="PTM">
    <text evidence="25">Ubiquitinated by MARCHF1 and MARCHF8 at Lys-254 leading to sorting into the endosome system and down-regulation of MHC class II.</text>
</comment>
<comment type="polymorphism">
    <text evidence="3 8 10 11 15">Highly polymorphic. Polymorphic residues encode for the beta-1 domain of the peptide-binding cleft, where they contribute to variations in peptide binding and TCR recognition among different alleles. The sequence shown is that of DRB3*01:01. The sequences of common representative alleles of serologically distinct allele groups as defined in the catalog of common and well-documented HLA alleles, are described as variants of DRB3*01:01. The most frequent alleles in human population are DRB3*01:01 (DR52a), DRB3*02:02 (DR52b) and DRB3*03:01 (DR52c) (PubMed:23510415). Allele DRB3*01:01 belongs to an ancestral haplotype and is associated with autoimmune diseases that are linked to antigen presentation. It is found in more than 95% of the homozygous HPA-1B mothers that produce anti-HPA-1A antibodies, leading to neonatal alloimmune thrombocytopenia (NAIT) (PubMed:19494351, PubMed:19535639). In the context of hematological malignancy and T cell transplantation, alleles DRB3*01:01 and DRB3*02:02 present minor histocompatibility antigens derived respectively from host PTK2B and MR1 proteins, contributing to T cell-mediated graft-versus-leukemia effect and complete remission (PubMed:19706888). Allele DRB3*03:01 plays an important role in the outcome of HLA-identical sex-mismatched organ transplantation. Presents to T-helper cells a minor histocompatibility antigen encoded by the Y chromosome RPS4Y1 (VIKVNDTVQI), leading to the maturation of dendritic cells and expansion of antigen-specific cytotoxic T cells, ultimately triggering transplant rejection (PubMed:12944060).</text>
</comment>
<comment type="similarity">
    <text evidence="24">Belongs to the MHC class II family.</text>
</comment>
<comment type="caution">
    <text evidence="24">HLA-DRB3, HLA-DRB4 and HLA-DRB5 may represent a unique gene.</text>
</comment>